<reference key="1">
    <citation type="journal article" date="1995" name="Cell">
        <title>The XRCC4 gene encodes a novel protein involved in DNA double-strand break repair and V(D)J recombination.</title>
        <authorList>
            <person name="Li Z."/>
            <person name="Otevrel T."/>
            <person name="Gao Y."/>
            <person name="Cheng H.L."/>
            <person name="Seed B."/>
            <person name="Stamato T.D."/>
            <person name="Taccioli G.E."/>
            <person name="Alt F.W."/>
        </authorList>
    </citation>
    <scope>NUCLEOTIDE SEQUENCE [MRNA] (ISOFORM 2)</scope>
    <scope>FUNCTION</scope>
    <scope>TISSUE SPECIFICITY</scope>
</reference>
<reference key="2">
    <citation type="submission" date="1998-03" db="EMBL/GenBank/DDBJ databases">
        <title>The genomic structure of the human XRCC4 gene.</title>
        <authorList>
            <person name="Fugmann S.D."/>
            <person name="Schwarz K."/>
        </authorList>
    </citation>
    <scope>NUCLEOTIDE SEQUENCE [GENOMIC DNA]</scope>
</reference>
<reference key="3">
    <citation type="submission" date="1998-09" db="EMBL/GenBank/DDBJ databases">
        <title>Human lymphoblastoid cell line TK-6 lacking in a novel component involved in V(D)J recombination.</title>
        <authorList>
            <person name="Tatsumi K."/>
        </authorList>
    </citation>
    <scope>NUCLEOTIDE SEQUENCE [MRNA] (ISOFORM 1)</scope>
</reference>
<reference key="4">
    <citation type="submission" date="2003-05" db="EMBL/GenBank/DDBJ databases">
        <title>Cloning of human full-length CDSs in BD Creator(TM) system donor vector.</title>
        <authorList>
            <person name="Kalnine N."/>
            <person name="Chen X."/>
            <person name="Rolfs A."/>
            <person name="Halleck A."/>
            <person name="Hines L."/>
            <person name="Eisenstein S."/>
            <person name="Koundinya M."/>
            <person name="Raphael J."/>
            <person name="Moreira D."/>
            <person name="Kelley T."/>
            <person name="LaBaer J."/>
            <person name="Lin Y."/>
            <person name="Phelan M."/>
            <person name="Farmer A."/>
        </authorList>
    </citation>
    <scope>NUCLEOTIDE SEQUENCE [LARGE SCALE MRNA] (ISOFORM 3)</scope>
</reference>
<reference key="5">
    <citation type="journal article" date="2004" name="Nat. Genet.">
        <title>Complete sequencing and characterization of 21,243 full-length human cDNAs.</title>
        <authorList>
            <person name="Ota T."/>
            <person name="Suzuki Y."/>
            <person name="Nishikawa T."/>
            <person name="Otsuki T."/>
            <person name="Sugiyama T."/>
            <person name="Irie R."/>
            <person name="Wakamatsu A."/>
            <person name="Hayashi K."/>
            <person name="Sato H."/>
            <person name="Nagai K."/>
            <person name="Kimura K."/>
            <person name="Makita H."/>
            <person name="Sekine M."/>
            <person name="Obayashi M."/>
            <person name="Nishi T."/>
            <person name="Shibahara T."/>
            <person name="Tanaka T."/>
            <person name="Ishii S."/>
            <person name="Yamamoto J."/>
            <person name="Saito K."/>
            <person name="Kawai Y."/>
            <person name="Isono Y."/>
            <person name="Nakamura Y."/>
            <person name="Nagahari K."/>
            <person name="Murakami K."/>
            <person name="Yasuda T."/>
            <person name="Iwayanagi T."/>
            <person name="Wagatsuma M."/>
            <person name="Shiratori A."/>
            <person name="Sudo H."/>
            <person name="Hosoiri T."/>
            <person name="Kaku Y."/>
            <person name="Kodaira H."/>
            <person name="Kondo H."/>
            <person name="Sugawara M."/>
            <person name="Takahashi M."/>
            <person name="Kanda K."/>
            <person name="Yokoi T."/>
            <person name="Furuya T."/>
            <person name="Kikkawa E."/>
            <person name="Omura Y."/>
            <person name="Abe K."/>
            <person name="Kamihara K."/>
            <person name="Katsuta N."/>
            <person name="Sato K."/>
            <person name="Tanikawa M."/>
            <person name="Yamazaki M."/>
            <person name="Ninomiya K."/>
            <person name="Ishibashi T."/>
            <person name="Yamashita H."/>
            <person name="Murakawa K."/>
            <person name="Fujimori K."/>
            <person name="Tanai H."/>
            <person name="Kimata M."/>
            <person name="Watanabe M."/>
            <person name="Hiraoka S."/>
            <person name="Chiba Y."/>
            <person name="Ishida S."/>
            <person name="Ono Y."/>
            <person name="Takiguchi S."/>
            <person name="Watanabe S."/>
            <person name="Yosida M."/>
            <person name="Hotuta T."/>
            <person name="Kusano J."/>
            <person name="Kanehori K."/>
            <person name="Takahashi-Fujii A."/>
            <person name="Hara H."/>
            <person name="Tanase T.-O."/>
            <person name="Nomura Y."/>
            <person name="Togiya S."/>
            <person name="Komai F."/>
            <person name="Hara R."/>
            <person name="Takeuchi K."/>
            <person name="Arita M."/>
            <person name="Imose N."/>
            <person name="Musashino K."/>
            <person name="Yuuki H."/>
            <person name="Oshima A."/>
            <person name="Sasaki N."/>
            <person name="Aotsuka S."/>
            <person name="Yoshikawa Y."/>
            <person name="Matsunawa H."/>
            <person name="Ichihara T."/>
            <person name="Shiohata N."/>
            <person name="Sano S."/>
            <person name="Moriya S."/>
            <person name="Momiyama H."/>
            <person name="Satoh N."/>
            <person name="Takami S."/>
            <person name="Terashima Y."/>
            <person name="Suzuki O."/>
            <person name="Nakagawa S."/>
            <person name="Senoh A."/>
            <person name="Mizoguchi H."/>
            <person name="Goto Y."/>
            <person name="Shimizu F."/>
            <person name="Wakebe H."/>
            <person name="Hishigaki H."/>
            <person name="Watanabe T."/>
            <person name="Sugiyama A."/>
            <person name="Takemoto M."/>
            <person name="Kawakami B."/>
            <person name="Yamazaki M."/>
            <person name="Watanabe K."/>
            <person name="Kumagai A."/>
            <person name="Itakura S."/>
            <person name="Fukuzumi Y."/>
            <person name="Fujimori Y."/>
            <person name="Komiyama M."/>
            <person name="Tashiro H."/>
            <person name="Tanigami A."/>
            <person name="Fujiwara T."/>
            <person name="Ono T."/>
            <person name="Yamada K."/>
            <person name="Fujii Y."/>
            <person name="Ozaki K."/>
            <person name="Hirao M."/>
            <person name="Ohmori Y."/>
            <person name="Kawabata A."/>
            <person name="Hikiji T."/>
            <person name="Kobatake N."/>
            <person name="Inagaki H."/>
            <person name="Ikema Y."/>
            <person name="Okamoto S."/>
            <person name="Okitani R."/>
            <person name="Kawakami T."/>
            <person name="Noguchi S."/>
            <person name="Itoh T."/>
            <person name="Shigeta K."/>
            <person name="Senba T."/>
            <person name="Matsumura K."/>
            <person name="Nakajima Y."/>
            <person name="Mizuno T."/>
            <person name="Morinaga M."/>
            <person name="Sasaki M."/>
            <person name="Togashi T."/>
            <person name="Oyama M."/>
            <person name="Hata H."/>
            <person name="Watanabe M."/>
            <person name="Komatsu T."/>
            <person name="Mizushima-Sugano J."/>
            <person name="Satoh T."/>
            <person name="Shirai Y."/>
            <person name="Takahashi Y."/>
            <person name="Nakagawa K."/>
            <person name="Okumura K."/>
            <person name="Nagase T."/>
            <person name="Nomura N."/>
            <person name="Kikuchi H."/>
            <person name="Masuho Y."/>
            <person name="Yamashita R."/>
            <person name="Nakai K."/>
            <person name="Yada T."/>
            <person name="Nakamura Y."/>
            <person name="Ohara O."/>
            <person name="Isogai T."/>
            <person name="Sugano S."/>
        </authorList>
    </citation>
    <scope>NUCLEOTIDE SEQUENCE [LARGE SCALE MRNA] (ISOFORM 1)</scope>
</reference>
<reference key="6">
    <citation type="submission" date="2005-02" db="EMBL/GenBank/DDBJ databases">
        <authorList>
            <consortium name="NIEHS SNPs program"/>
        </authorList>
    </citation>
    <scope>NUCLEOTIDE SEQUENCE [GENOMIC DNA]</scope>
    <scope>VARIANTS CYS-12; THR-56; THR-134; GLN-142 AND SER-247</scope>
</reference>
<reference key="7">
    <citation type="submission" date="2005-07" db="EMBL/GenBank/DDBJ databases">
        <authorList>
            <person name="Mural R.J."/>
            <person name="Istrail S."/>
            <person name="Sutton G.G."/>
            <person name="Florea L."/>
            <person name="Halpern A.L."/>
            <person name="Mobarry C.M."/>
            <person name="Lippert R."/>
            <person name="Walenz B."/>
            <person name="Shatkay H."/>
            <person name="Dew I."/>
            <person name="Miller J.R."/>
            <person name="Flanigan M.J."/>
            <person name="Edwards N.J."/>
            <person name="Bolanos R."/>
            <person name="Fasulo D."/>
            <person name="Halldorsson B.V."/>
            <person name="Hannenhalli S."/>
            <person name="Turner R."/>
            <person name="Yooseph S."/>
            <person name="Lu F."/>
            <person name="Nusskern D.R."/>
            <person name="Shue B.C."/>
            <person name="Zheng X.H."/>
            <person name="Zhong F."/>
            <person name="Delcher A.L."/>
            <person name="Huson D.H."/>
            <person name="Kravitz S.A."/>
            <person name="Mouchard L."/>
            <person name="Reinert K."/>
            <person name="Remington K.A."/>
            <person name="Clark A.G."/>
            <person name="Waterman M.S."/>
            <person name="Eichler E.E."/>
            <person name="Adams M.D."/>
            <person name="Hunkapiller M.W."/>
            <person name="Myers E.W."/>
            <person name="Venter J.C."/>
        </authorList>
    </citation>
    <scope>NUCLEOTIDE SEQUENCE [LARGE SCALE GENOMIC DNA]</scope>
</reference>
<reference key="8">
    <citation type="journal article" date="2004" name="Genome Res.">
        <title>The status, quality, and expansion of the NIH full-length cDNA project: the Mammalian Gene Collection (MGC).</title>
        <authorList>
            <consortium name="The MGC Project Team"/>
        </authorList>
    </citation>
    <scope>NUCLEOTIDE SEQUENCE [LARGE SCALE MRNA] (ISOFORMS 1 AND 3)</scope>
    <source>
        <tissue>Bone marrow</tissue>
    </source>
</reference>
<reference key="9">
    <citation type="journal article" date="1997" name="Curr. Biol.">
        <title>Mammalian DNA double-strand break repair protein XRCC4 interacts with DNA ligase IV.</title>
        <authorList>
            <person name="Critchlow S.E."/>
            <person name="Bowater R.P."/>
            <person name="Jackson S.P."/>
        </authorList>
    </citation>
    <scope>INTERACTION WITH LIG4</scope>
    <scope>PHOSPHORYLATION</scope>
    <scope>SUBCELLULAR LOCATION</scope>
</reference>
<reference key="10">
    <citation type="journal article" date="1998" name="J. Biol. Chem.">
        <title>The XRCC4 gene product is a target for and interacts with the DNA-dependent protein kinase.</title>
        <authorList>
            <person name="Leber R."/>
            <person name="Wise T.W."/>
            <person name="Mizuta R."/>
            <person name="Meek K."/>
        </authorList>
    </citation>
    <scope>PHOSPHORYLATION BY PRKDC</scope>
</reference>
<reference key="11">
    <citation type="journal article" date="2004" name="DNA Repair">
        <title>Identification of DNA-PKcs phosphorylation sites in XRCC4 and effects of mutations at these sites on DNA end joining in a cell-free system.</title>
        <authorList>
            <person name="Lee K.J."/>
            <person name="Jovanovic M."/>
            <person name="Udayakumar D."/>
            <person name="Bladen C.L."/>
            <person name="Dynan W.S."/>
        </authorList>
    </citation>
    <scope>PHOSPHORYLATION AT SER-260 AND SER-320</scope>
</reference>
<reference key="12">
    <citation type="journal article" date="1997" name="Nature">
        <title>Activity of DNA ligase IV stimulated by complex formation with XRCC4 protein in mammalian cells.</title>
        <authorList>
            <person name="Grawunder U."/>
            <person name="Wilm M."/>
            <person name="Wu X."/>
            <person name="Kulesza P."/>
            <person name="Wilson T.E."/>
            <person name="Mann M."/>
            <person name="Lieber M.R."/>
        </authorList>
    </citation>
    <scope>FUNCTION</scope>
    <scope>INTERACTION WITH LIG4</scope>
</reference>
<reference key="13">
    <citation type="journal article" date="2000" name="FEBS Lett.">
        <title>Cleavage and phosphorylation of XRCC4 protein induced by X-irradiation.</title>
        <authorList>
            <person name="Matsumoto Y."/>
            <person name="Suzuki N."/>
            <person name="Namba N."/>
            <person name="Umeda N."/>
            <person name="Ma X.J."/>
            <person name="Morita A."/>
            <person name="Tomita M."/>
            <person name="Enomoto A."/>
            <person name="Serizawa S."/>
            <person name="Hirano K."/>
            <person name="Sakaia K."/>
            <person name="Yasuda H."/>
            <person name="Hosoi Y."/>
        </authorList>
    </citation>
    <scope>PROTEOLYTIC CLEAVAGE</scope>
    <scope>PHOSPHORYLATION</scope>
</reference>
<reference key="14">
    <citation type="journal article" date="2000" name="J. Biol. Chem.">
        <title>Interactions of the DNA ligase IV-XRCC4 complex with DNA ends and the DNA-dependent protein kinase.</title>
        <authorList>
            <person name="Chen L."/>
            <person name="Trujillo K."/>
            <person name="Sung P."/>
            <person name="Tomkinson A.E."/>
        </authorList>
    </citation>
    <scope>FUNCTION</scope>
    <scope>INTERACTION WITH LIG4; XRCC6; XRCC5 AND PRKDC</scope>
</reference>
<reference key="15">
    <citation type="journal article" date="2000" name="Mol. Cell. Biol.">
        <title>Ku recruits the XRCC4-ligase IV complex to DNA ends.</title>
        <authorList>
            <person name="Nick McElhinny S.A."/>
            <person name="Snowden C.M."/>
            <person name="McCarville J."/>
            <person name="Ramsden D.A."/>
        </authorList>
    </citation>
    <scope>FUNCTION</scope>
    <scope>INTERACTION WITH XRCC6 AND XRCC5</scope>
</reference>
<reference key="16">
    <citation type="journal article" date="2002" name="DNA Repair">
        <title>Defining interactions between DNA-PK and ligase IV/XRCC4.</title>
        <authorList>
            <person name="Hsu H.-L."/>
            <person name="Yannone S.M."/>
            <person name="Chen D.J."/>
        </authorList>
    </citation>
    <scope>INTERACTION WITH PRKDC</scope>
</reference>
<reference key="17">
    <citation type="journal article" date="2003" name="Cancer Res.">
        <title>Requirement for XRCC4 and DNA ligase IV in alignment-based gap filling for nonhomologous DNA end joining in vitro.</title>
        <authorList>
            <person name="Lee J.W."/>
            <person name="Yannone S.M."/>
            <person name="Chen D.J."/>
            <person name="Povirk L.F."/>
        </authorList>
    </citation>
    <scope>FUNCTION</scope>
    <scope>INTERACTION WITH LIG4</scope>
</reference>
<reference key="18">
    <citation type="journal article" date="2003" name="DNA Repair">
        <title>DNA-PK phosphorylation sites in XRCC4 are not required for survival after radiation or for V(D)J recombination.</title>
        <authorList>
            <person name="Yu Y."/>
            <person name="Wang W."/>
            <person name="Ding Q."/>
            <person name="Ye R."/>
            <person name="Chen D."/>
            <person name="Merkle D."/>
            <person name="Schriemer D."/>
            <person name="Meek K."/>
            <person name="Lees-Miller S.P."/>
        </authorList>
    </citation>
    <scope>PHOSPHORYLATION AT SER-53; SER-193; SER-260; SER-303; SER-315; SER-320; THR-323; SER-327 AND SER-328</scope>
    <scope>MUTAGENESIS OF SER-260 AND SER-320</scope>
</reference>
<reference key="19">
    <citation type="journal article" date="2003" name="J. Mol. Biol.">
        <title>Coordinated assembly of Ku and p460 subunits of the DNA-dependent protein kinase on DNA ends is necessary for XRCC4-ligase IV recruitment.</title>
        <authorList>
            <person name="Calsou P."/>
            <person name="Delteil C."/>
            <person name="Frit P."/>
            <person name="Drouet J."/>
            <person name="Salles B."/>
        </authorList>
    </citation>
    <scope>IDENTIFICATION IN A COMPLEX WITH XRCC6; XRCC5 AND PRKDC</scope>
    <scope>PHOSPHORYLATION</scope>
</reference>
<reference key="20">
    <citation type="journal article" date="2004" name="DNA Repair">
        <title>The ataxia-oculomotor apraxia 1 gene product has a role distinct from ATM and interacts with the DNA strand break repair proteins XRCC1 and XRCC4.</title>
        <authorList>
            <person name="Clements P.M."/>
            <person name="Breslin C."/>
            <person name="Deeks E.D."/>
            <person name="Byrd P.J."/>
            <person name="Ju L."/>
            <person name="Bieganowski P."/>
            <person name="Brenner C."/>
            <person name="Moreira M.-C."/>
            <person name="Taylor A.M.R."/>
            <person name="Caldecott K.W."/>
        </authorList>
    </citation>
    <scope>INTERACTION WITH APTX</scope>
    <scope>PHOSPHORYLATION</scope>
</reference>
<reference key="21">
    <citation type="journal article" date="2004" name="EMBO J.">
        <title>Xrcc4 physically links DNA end processing by polynucleotide kinase to DNA ligation by DNA ligase IV.</title>
        <authorList>
            <person name="Koch C.A."/>
            <person name="Agyei R."/>
            <person name="Galicia S."/>
            <person name="Metalnikov P."/>
            <person name="O'Donnell P."/>
            <person name="Starostine A."/>
            <person name="Weinfeld M."/>
            <person name="Durocher D."/>
        </authorList>
    </citation>
    <scope>FUNCTION</scope>
    <scope>PHOSPHORYLATION AT THR-233</scope>
    <scope>INTERACTION WITH PNKP</scope>
    <scope>MUTAGENESIS OF THR-233; THR-264; THR-282; THR-308 AND THR-323</scope>
</reference>
<reference key="22">
    <citation type="journal article" date="2006" name="Biochem. Biophys. Res. Commun.">
        <title>Monoubiquitination of the nonhomologous end joining protein XRCC4.</title>
        <authorList>
            <person name="Foster R.E."/>
            <person name="Nnakwe C."/>
            <person name="Woo L."/>
            <person name="Frank K.M."/>
        </authorList>
    </citation>
    <scope>MONOUBIQUITINATION</scope>
    <scope>PHOSPHORYLATION</scope>
    <scope>FUNCTION</scope>
</reference>
<reference key="23">
    <citation type="journal article" date="2006" name="Cell">
        <title>XLF interacts with the XRCC4-DNA ligase IV complex to promote DNA nonhomologous end-joining.</title>
        <authorList>
            <person name="Ahnesorg P."/>
            <person name="Smith P."/>
            <person name="Jackson S.P."/>
        </authorList>
    </citation>
    <scope>INTERACTION WITH NHEJ1</scope>
</reference>
<reference key="24">
    <citation type="journal article" date="2006" name="Proc. Natl. Acad. Sci. U.S.A.">
        <title>Dynamic assembly of end-joining complexes requires interaction between Ku70/80 and XRCC4.</title>
        <authorList>
            <person name="Mari P.O."/>
            <person name="Florea B.I."/>
            <person name="Persengiev S.P."/>
            <person name="Verkaik N.S."/>
            <person name="Brueggenwirth H.T."/>
            <person name="Modesti M."/>
            <person name="Giglia-Mari G."/>
            <person name="Bezstarosti K."/>
            <person name="Demmers J.A."/>
            <person name="Luider T.M."/>
            <person name="Houtsmuller A.B."/>
            <person name="van Gent D.C."/>
        </authorList>
    </citation>
    <scope>FUNCTION</scope>
    <scope>INTERACTION WITH XRCC6</scope>
</reference>
<reference key="25">
    <citation type="journal article" date="2006" name="Mol. Cell. Biol.">
        <title>SUMO modification of human XRCC4 regulates its localization and function in DNA double-strand break repair.</title>
        <authorList>
            <person name="Yurchenko V."/>
            <person name="Xue Z."/>
            <person name="Sadofsky M.J."/>
        </authorList>
    </citation>
    <scope>SUMOYLATION AT LYS-210</scope>
    <scope>SUBCELLULAR LOCATION</scope>
    <scope>MUTAGENESIS OF LYS-140 AND LYS-210</scope>
</reference>
<reference key="26">
    <citation type="journal article" date="2007" name="DNA Repair">
        <title>Modes of interaction among yeast Nej1, Lif1 and Dnl4 proteins and comparison to human XLF, XRCC4 and Lig4.</title>
        <authorList>
            <person name="Deshpande R.A."/>
            <person name="Wilson T.E."/>
        </authorList>
    </citation>
    <scope>SUBUNIT</scope>
    <scope>INTERACTION WITH NHEJ1 AND LIG4</scope>
</reference>
<reference key="27">
    <citation type="journal article" date="2007" name="EMBO J.">
        <title>XRCC4:DNA ligase IV can ligate incompatible DNA ends and can ligate across gaps.</title>
        <authorList>
            <person name="Gu J."/>
            <person name="Lu H."/>
            <person name="Tippin B."/>
            <person name="Shimazaki N."/>
            <person name="Goodman M.F."/>
            <person name="Lieber M.R."/>
        </authorList>
    </citation>
    <scope>FUNCTION</scope>
    <scope>INTERACTION WITH LIG4</scope>
</reference>
<reference key="28">
    <citation type="journal article" date="2007" name="EMBO J.">
        <title>A novel human AP endonuclease with conserved zinc-finger-like motifs involved in DNA strand break responses.</title>
        <authorList>
            <person name="Kanno S."/>
            <person name="Kuzuoka H."/>
            <person name="Sasao S."/>
            <person name="Hong Z."/>
            <person name="Lan L."/>
            <person name="Nakajima S."/>
            <person name="Yasui A."/>
        </authorList>
    </citation>
    <scope>INTERACTION WITH APLF</scope>
</reference>
<reference key="29">
    <citation type="journal article" date="2007" name="Mol. Cell. Biol.">
        <title>APLF (C2orf13) is a novel human protein involved in the cellular response to chromosomal DNA strand breaks.</title>
        <authorList>
            <person name="Iles N."/>
            <person name="Rulten S."/>
            <person name="El-Khamisy S.F."/>
            <person name="Caldecott K.W."/>
        </authorList>
    </citation>
    <scope>INTERACTION WITH APLF</scope>
</reference>
<reference key="30">
    <citation type="journal article" date="2007" name="Mol. Cell">
        <title>Crystal structure of human XLF: a twist in nonhomologous DNA end-joining.</title>
        <authorList>
            <person name="Andres S.N."/>
            <person name="Modesti M."/>
            <person name="Tsai C.J."/>
            <person name="Chu G."/>
            <person name="Junop M.S."/>
        </authorList>
    </citation>
    <scope>INTERACTION WITH NHEJ1</scope>
    <scope>MUTAGENESIS OF LYS-4; LYS-26; LYS-65; ARG-71; LYS-72; LYS-99 AND LYS-102</scope>
</reference>
<reference key="31">
    <citation type="journal article" date="2008" name="DNA Repair">
        <title>APLF (C2orf13) facilitates nonhomologous end-joining and undergoes ATM-dependent hyperphosphorylation following ionizing radiation.</title>
        <authorList>
            <person name="Macrae C.J."/>
            <person name="McCulloch R.D."/>
            <person name="Ylanko J."/>
            <person name="Durocher D."/>
            <person name="Koch C.A."/>
        </authorList>
    </citation>
    <scope>INTERACTION WITH APLF</scope>
</reference>
<reference key="32">
    <citation type="journal article" date="2008" name="Proc. Natl. Acad. Sci. U.S.A.">
        <title>A quantitative atlas of mitotic phosphorylation.</title>
        <authorList>
            <person name="Dephoure N."/>
            <person name="Zhou C."/>
            <person name="Villen J."/>
            <person name="Beausoleil S.A."/>
            <person name="Bakalarski C.E."/>
            <person name="Elledge S.J."/>
            <person name="Gygi S.P."/>
        </authorList>
    </citation>
    <scope>PHOSPHORYLATION [LARGE SCALE ANALYSIS] AT SER-327 AND SER-328</scope>
    <scope>IDENTIFICATION BY MASS SPECTROMETRY [LARGE SCALE ANALYSIS]</scope>
    <source>
        <tissue>Cervix carcinoma</tissue>
    </source>
</reference>
<reference key="33">
    <citation type="journal article" date="2009" name="DNA Repair">
        <title>Electron microscopy of Xrcc4 and the DNA ligase IV-Xrcc4 DNA repair complex.</title>
        <authorList>
            <person name="Recuero-Checa M.A."/>
            <person name="Dore A.S."/>
            <person name="Arias-Palomo E."/>
            <person name="Rivera-Calzada A."/>
            <person name="Scheres S.H."/>
            <person name="Maman J.D."/>
            <person name="Pearl L.H."/>
            <person name="Llorca O."/>
        </authorList>
    </citation>
    <scope>INTERACTION WITH LIG4</scope>
</reference>
<reference key="34">
    <citation type="journal article" date="2009" name="Sci. Signal.">
        <title>Quantitative phosphoproteomic analysis of T cell receptor signaling reveals system-wide modulation of protein-protein interactions.</title>
        <authorList>
            <person name="Mayya V."/>
            <person name="Lundgren D.H."/>
            <person name="Hwang S.-I."/>
            <person name="Rezaul K."/>
            <person name="Wu L."/>
            <person name="Eng J.K."/>
            <person name="Rodionov V."/>
            <person name="Han D.K."/>
        </authorList>
    </citation>
    <scope>PHOSPHORYLATION [LARGE SCALE ANALYSIS] AT SER-327 AND SER-328</scope>
    <scope>IDENTIFICATION BY MASS SPECTROMETRY [LARGE SCALE ANALYSIS]</scope>
    <source>
        <tissue>Leukemic T-cell</tissue>
    </source>
</reference>
<reference key="35">
    <citation type="journal article" date="2010" name="J. Biol. Chem.">
        <title>Delineation of the Xrcc4-interacting region in the globular head domain of cernunnos/XLF.</title>
        <authorList>
            <person name="Malivert L."/>
            <person name="Ropars V."/>
            <person name="Nunez M."/>
            <person name="Drevet P."/>
            <person name="Miron S."/>
            <person name="Faure G."/>
            <person name="Guerois R."/>
            <person name="Mornon J.P."/>
            <person name="Revy P."/>
            <person name="Charbonnier J.B."/>
            <person name="Callebaut I."/>
            <person name="de Villartay J.P."/>
        </authorList>
    </citation>
    <scope>INTERACTION WITH NHEJ1</scope>
</reference>
<reference key="36">
    <citation type="journal article" date="2010" name="J. Biol. Chem.">
        <title>Dual modes of interaction between XRCC4 and polynucleotide kinase/phosphatase: implications for nonhomologous end joining.</title>
        <authorList>
            <person name="Mani R.S."/>
            <person name="Yu Y."/>
            <person name="Fang S."/>
            <person name="Lu M."/>
            <person name="Fanta M."/>
            <person name="Zolner A.E."/>
            <person name="Tahbaz N."/>
            <person name="Ramsden D.A."/>
            <person name="Litchfield D.W."/>
            <person name="Lees-Miller S.P."/>
            <person name="Weinfeld M."/>
        </authorList>
    </citation>
    <scope>FUNCTION</scope>
    <scope>PHOSPHORYLATION AT THR-233</scope>
    <scope>INTERACTION WITH PNKP</scope>
</reference>
<reference key="37">
    <citation type="journal article" date="2010" name="Sci. Signal.">
        <title>Quantitative phosphoproteomics reveals widespread full phosphorylation site occupancy during mitosis.</title>
        <authorList>
            <person name="Olsen J.V."/>
            <person name="Vermeulen M."/>
            <person name="Santamaria A."/>
            <person name="Kumar C."/>
            <person name="Miller M.L."/>
            <person name="Jensen L.J."/>
            <person name="Gnad F."/>
            <person name="Cox J."/>
            <person name="Jensen T.S."/>
            <person name="Nigg E.A."/>
            <person name="Brunak S."/>
            <person name="Mann M."/>
        </authorList>
    </citation>
    <scope>PHOSPHORYLATION [LARGE SCALE ANALYSIS] AT SER-256</scope>
    <scope>IDENTIFICATION BY MASS SPECTROMETRY [LARGE SCALE ANALYSIS]</scope>
    <source>
        <tissue>Cervix carcinoma</tissue>
    </source>
</reference>
<reference key="38">
    <citation type="journal article" date="2011" name="Acta Crystallogr. F">
        <title>Crystallization and preliminary X-ray diffraction analysis of the human XRCC4-XLF complex.</title>
        <authorList>
            <person name="Andres S.N."/>
            <person name="Junop M.S."/>
        </authorList>
    </citation>
    <scope>CRYSTALLIZATION</scope>
</reference>
<reference key="39">
    <citation type="journal article" date="2011" name="BMC Syst. Biol.">
        <title>Initial characterization of the human central proteome.</title>
        <authorList>
            <person name="Burkard T.R."/>
            <person name="Planyavsky M."/>
            <person name="Kaupe I."/>
            <person name="Breitwieser F.P."/>
            <person name="Buerckstuemmer T."/>
            <person name="Bennett K.L."/>
            <person name="Superti-Furga G."/>
            <person name="Colinge J."/>
        </authorList>
    </citation>
    <scope>IDENTIFICATION BY MASS SPECTROMETRY [LARGE SCALE ANALYSIS]</scope>
</reference>
<reference key="40">
    <citation type="journal article" date="2011" name="DNA Repair">
        <title>XRCC4 controls nuclear import and distribution of Ligase IV and exchanges faster at damaged DNA in complex with Ligase IV.</title>
        <authorList>
            <person name="Berg E."/>
            <person name="Christensen M.O."/>
            <person name="Dalla Rosa I."/>
            <person name="Wannagat E."/>
            <person name="Jaenicke R.U."/>
            <person name="Roesner L.M."/>
            <person name="Dirks W.G."/>
            <person name="Boege F."/>
            <person name="Mielke C."/>
        </authorList>
    </citation>
    <scope>FUNCTION</scope>
    <scope>SUBCELLULAR LOCATION</scope>
    <scope>INTERACTION WITH LIG4</scope>
</reference>
<reference key="41">
    <citation type="journal article" date="2011" name="Sci. Signal.">
        <title>System-wide temporal characterization of the proteome and phosphoproteome of human embryonic stem cell differentiation.</title>
        <authorList>
            <person name="Rigbolt K.T."/>
            <person name="Prokhorova T.A."/>
            <person name="Akimov V."/>
            <person name="Henningsen J."/>
            <person name="Johansen P.T."/>
            <person name="Kratchmarova I."/>
            <person name="Kassem M."/>
            <person name="Mann M."/>
            <person name="Olsen J.V."/>
            <person name="Blagoev B."/>
        </authorList>
    </citation>
    <scope>IDENTIFICATION BY MASS SPECTROMETRY [LARGE SCALE ANALYSIS]</scope>
</reference>
<reference key="42">
    <citation type="journal article" date="2012" name="Nucleic Acids Res.">
        <title>XRCC4's interaction with XLF is required for coding (but not signal) end joining.</title>
        <authorList>
            <person name="Roy S."/>
            <person name="Andres S.N."/>
            <person name="Vergnes A."/>
            <person name="Neal J.A."/>
            <person name="Xu Y."/>
            <person name="Yu Y."/>
            <person name="Lees-Miller S.P."/>
            <person name="Junop M."/>
            <person name="Modesti M."/>
            <person name="Meek K."/>
        </authorList>
    </citation>
    <scope>FUNCTION</scope>
    <scope>INTERACTION WITH NHEJ1</scope>
    <scope>PHOSPHORYLATION AT SER-193; SER-260; SER-303; SER-315; SER-320; THR-323; SER-327 AND SER-328</scope>
</reference>
<reference key="43">
    <citation type="journal article" date="2012" name="Structure">
        <title>Structural insights into the role of domain flexibility in human DNA ligase IV.</title>
        <authorList>
            <person name="Ochi T."/>
            <person name="Wu Q."/>
            <person name="Chirgadze D.Y."/>
            <person name="Grossmann J.G."/>
            <person name="Bolanos-Garcia V.M."/>
            <person name="Blundell T.L."/>
        </authorList>
    </citation>
    <scope>INTERACTION WITH LIG4 AND NHEJ1</scope>
</reference>
<reference key="44">
    <citation type="journal article" date="2013" name="J. Proteome Res.">
        <title>Toward a comprehensive characterization of a human cancer cell phosphoproteome.</title>
        <authorList>
            <person name="Zhou H."/>
            <person name="Di Palma S."/>
            <person name="Preisinger C."/>
            <person name="Peng M."/>
            <person name="Polat A.N."/>
            <person name="Heck A.J."/>
            <person name="Mohammed S."/>
        </authorList>
    </citation>
    <scope>PHOSPHORYLATION [LARGE SCALE ANALYSIS] AT SER-260; SER-304 AND SER-320</scope>
    <scope>IDENTIFICATION BY MASS SPECTROMETRY [LARGE SCALE ANALYSIS]</scope>
    <source>
        <tissue>Cervix carcinoma</tissue>
        <tissue>Erythroleukemia</tissue>
    </source>
</reference>
<reference key="45">
    <citation type="journal article" date="2014" name="DNA Repair">
        <title>DNA Ligase IV regulates XRCC4 nuclear localization.</title>
        <authorList>
            <person name="Francis D.B."/>
            <person name="Kozlov M."/>
            <person name="Chavez J."/>
            <person name="Chu J."/>
            <person name="Malu S."/>
            <person name="Hanna M."/>
            <person name="Cortes P."/>
        </authorList>
    </citation>
    <scope>SUBCELLULAR LOCATION</scope>
    <scope>INTERACTION WITH LIG4</scope>
</reference>
<reference key="46">
    <citation type="journal article" date="2014" name="Genome Res.">
        <title>Genomic analysis of primordial dwarfism reveals novel disease genes.</title>
        <authorList>
            <person name="Shaheen R."/>
            <person name="Faqeih E."/>
            <person name="Ansari S."/>
            <person name="Abdel-Salam G."/>
            <person name="Al-Hassnan Z.N."/>
            <person name="Al-Shidi T."/>
            <person name="Alomar R."/>
            <person name="Sogaty S."/>
            <person name="Alkuraya F.S."/>
        </authorList>
    </citation>
    <scope>INVOLVEMENT IN SSMED</scope>
    <scope>VARIANT SSMED ARG-43</scope>
</reference>
<reference key="47">
    <citation type="journal article" date="2014" name="J. Proteomics">
        <title>An enzyme assisted RP-RPLC approach for in-depth analysis of human liver phosphoproteome.</title>
        <authorList>
            <person name="Bian Y."/>
            <person name="Song C."/>
            <person name="Cheng K."/>
            <person name="Dong M."/>
            <person name="Wang F."/>
            <person name="Huang J."/>
            <person name="Sun D."/>
            <person name="Wang L."/>
            <person name="Ye M."/>
            <person name="Zou H."/>
        </authorList>
    </citation>
    <scope>PHOSPHORYLATION [LARGE SCALE ANALYSIS] AT TYR-229; THR-233 AND SER-237</scope>
    <scope>IDENTIFICATION BY MASS SPECTROMETRY [LARGE SCALE ANALYSIS]</scope>
    <source>
        <tissue>Liver</tissue>
    </source>
</reference>
<reference key="48">
    <citation type="journal article" date="2015" name="Biochem. Biophys. Res. Commun.">
        <title>Asparagine 326 in the extremely C-terminal region of XRCC4 is essential for the cell survival after irradiation.</title>
        <authorList>
            <person name="Wanotayan R."/>
            <person name="Fukuchi M."/>
            <person name="Imamichi S."/>
            <person name="Sharma M.K."/>
            <person name="Matsumoto Y."/>
        </authorList>
    </citation>
    <scope>FUNCTION</scope>
    <scope>SUBCELLULAR LOCATION</scope>
    <scope>MUTAGENESIS OF GLU-235; GLU-322; THR-323; LEU-324; ASN-326; SER-327; SER-328; PRO-329; GLU-330; ASP-331; LEU-332; PHE-333 AND ASP-334</scope>
</reference>
<reference key="49">
    <citation type="journal article" date="2015" name="Biochem. Biophys. Res. Commun.">
        <title>Lysine 271 but not lysine 210 of XRCC4 is required for the nuclear localization of XRCC4 and DNA ligase IV.</title>
        <authorList>
            <person name="Fukuchi M."/>
            <person name="Wanotayan R."/>
            <person name="Liu S."/>
            <person name="Imamichi S."/>
            <person name="Sharma M.K."/>
            <person name="Matsumoto Y."/>
        </authorList>
    </citation>
    <scope>FUNCTION</scope>
    <scope>SUBCELLULAR LOCATION</scope>
    <scope>INTERACTION WITH LIG4</scope>
    <scope>NUCLEAR LOCALIZATION SIGNAL</scope>
    <scope>MUTAGENESIS OF LYS-210 AND LYS-271</scope>
</reference>
<reference key="50">
    <citation type="journal article" date="2015" name="Cell Death Differ.">
        <title>XLS (c9orf142) is a new component of mammalian DNA double-stranded break repair.</title>
        <authorList>
            <person name="Craxton A."/>
            <person name="Somers J."/>
            <person name="Munnur D."/>
            <person name="Jukes-Jones R."/>
            <person name="Cain K."/>
            <person name="Malewicz M."/>
        </authorList>
    </citation>
    <scope>SUBUNIT</scope>
</reference>
<reference key="51">
    <citation type="journal article" date="2015" name="Mol. Cell. Biol.">
        <title>XRCC4/XLF interaction is variably required for DNA repair and is not required for ligase IV stimulation.</title>
        <authorList>
            <person name="Roy S."/>
            <person name="de Melo A.J."/>
            <person name="Xu Y."/>
            <person name="Tadi S.K."/>
            <person name="Negrel A."/>
            <person name="Hendrickson E."/>
            <person name="Modesti M."/>
            <person name="Meek K."/>
        </authorList>
    </citation>
    <scope>FUNCTION</scope>
    <scope>INTERACTION WITH NHEJ1</scope>
</reference>
<reference key="52">
    <citation type="journal article" date="2015" name="Nat. Commun.">
        <title>Interactome analysis identifies a new paralogue of XRCC4 in non-homologous end joining DNA repair pathway.</title>
        <authorList>
            <person name="Xing M."/>
            <person name="Yang M."/>
            <person name="Huo W."/>
            <person name="Feng F."/>
            <person name="Wei L."/>
            <person name="Jiang W."/>
            <person name="Ning S."/>
            <person name="Yan Z."/>
            <person name="Li W."/>
            <person name="Wang Q."/>
            <person name="Hou M."/>
            <person name="Dong C."/>
            <person name="Guo R."/>
            <person name="Gao G."/>
            <person name="Ji J."/>
            <person name="Zha S."/>
            <person name="Lan L."/>
            <person name="Liang H."/>
            <person name="Xu D."/>
        </authorList>
    </citation>
    <scope>SUBUNIT</scope>
</reference>
<reference key="53">
    <citation type="journal article" date="2015" name="Science">
        <title>DNA repair. PAXX, a paralog of XRCC4 and XLF, interacts with Ku to promote DNA double-strand break repair.</title>
        <authorList>
            <person name="Ochi T."/>
            <person name="Blackford A.N."/>
            <person name="Coates J."/>
            <person name="Jhujh S."/>
            <person name="Mehmood S."/>
            <person name="Tamura N."/>
            <person name="Travers J."/>
            <person name="Wu Q."/>
            <person name="Draviam V.M."/>
            <person name="Robinson C.V."/>
            <person name="Blundell T.L."/>
            <person name="Jackson S.P."/>
        </authorList>
    </citation>
    <scope>SUBUNIT</scope>
</reference>
<reference key="54">
    <citation type="journal article" date="2016" name="J. Radiat. Res.">
        <title>In cellulo phosphorylation of XRCC4 Ser320 by DNA-PK induced by DNA damage.</title>
        <authorList>
            <person name="Sharma M.K."/>
            <person name="Imamichi S."/>
            <person name="Fukuchi M."/>
            <person name="Samarth R.M."/>
            <person name="Tomita M."/>
            <person name="Matsumoto Y."/>
        </authorList>
    </citation>
    <scope>PHOSPHORYLATION AT SER-320</scope>
</reference>
<reference key="55">
    <citation type="journal article" date="2016" name="Mol. Cell">
        <title>FBXW7 facilitates nonhomologous end-joining via K63-linked polyubiquitylation of XRCC4.</title>
        <authorList>
            <person name="Zhang Q."/>
            <person name="Karnak D."/>
            <person name="Tan M."/>
            <person name="Lawrence T.S."/>
            <person name="Morgan M.A."/>
            <person name="Sun Y."/>
        </authorList>
    </citation>
    <scope>FUNCTION</scope>
    <scope>SUBCELLULAR LOCATION</scope>
    <scope>INTERACTION WITH XRCC5 AND XRCC6</scope>
    <scope>PHOSPHORYLATION AT SER-327 AND SER-328</scope>
    <scope>UBIQUITINATION AT LYS-296</scope>
    <scope>MUTAGENESIS OF LYS-271; LYS-285; LYS-296; THR-308 AND 327-SER-SER-328</scope>
</reference>
<reference key="56">
    <citation type="journal article" date="2016" name="Nature">
        <title>Sliding sleeves of XRCC4-XLF bridge DNA and connect fragments of broken DNA.</title>
        <authorList>
            <person name="Brouwer I."/>
            <person name="Sitters G."/>
            <person name="Candelli A."/>
            <person name="Heerema S.J."/>
            <person name="Heller I."/>
            <person name="de Melo A.J."/>
            <person name="Zhang H."/>
            <person name="Normanno D."/>
            <person name="Modesti M."/>
            <person name="Peterman E.J."/>
            <person name="Wuite G.J."/>
        </authorList>
    </citation>
    <scope>FUNCTION</scope>
    <scope>INTERACTION WITH NHEJ1</scope>
    <scope>SUBCELLULAR LOCATION</scope>
</reference>
<reference key="57">
    <citation type="journal article" date="2017" name="Elife">
        <title>Mutational phospho-mimicry reveals a regulatory role for the XRCC4 and XLF C-terminal tails in modulating DNA bridging during classical non-homologous end joining.</title>
        <authorList>
            <person name="Normanno D."/>
            <person name="Negrel A."/>
            <person name="de Melo A.J."/>
            <person name="Betzi S."/>
            <person name="Meek K."/>
            <person name="Modesti M."/>
        </authorList>
    </citation>
    <scope>FUNCTION</scope>
    <scope>PHOSPHORYLATION AT SER-193; SER-260; SER-304; SER-315; SER-320; THR-323; SER-327 AND SER-328</scope>
    <scope>MUTAGENESIS OF SER-193; SER-260; SER-304; SER-315; SER-320; THR-323; SER-327 AND SER-328</scope>
</reference>
<reference key="58">
    <citation type="journal article" date="2017" name="Nucleic Acids Res.">
        <title>Structural and functional characterization of the PNKP-XRCC4-LigIV DNA repair complex.</title>
        <authorList>
            <person name="Aceytuno R.D."/>
            <person name="Piett C.G."/>
            <person name="Havali-Shahriari Z."/>
            <person name="Edwards R.A."/>
            <person name="Rey M."/>
            <person name="Ye R."/>
            <person name="Javed F."/>
            <person name="Fang S."/>
            <person name="Mani R."/>
            <person name="Weinfeld M."/>
            <person name="Hammel M."/>
            <person name="Tainer J.A."/>
            <person name="Schriemer D.C."/>
            <person name="Lees-Miller S.P."/>
            <person name="Glover J.N.M."/>
        </authorList>
    </citation>
    <scope>FUNCTION</scope>
    <scope>PHOSPHORYLATION AT SER-232 AND THR-233</scope>
    <scope>INTERACTION WITH PNKP</scope>
</reference>
<reference key="59">
    <citation type="journal article" date="2018" name="J. Radiat. Res.">
        <title>In cellulo phosphorylation of DNA double-strand break repair protein XRCC4 on Ser260 by DNA-PK.</title>
        <authorList>
            <person name="Amiri Moghani A.R."/>
            <person name="Sharma M.K."/>
            <person name="Matsumoto Y."/>
        </authorList>
    </citation>
    <scope>PHOSPHORYLATION AT SER-260</scope>
    <scope>MUTAGENESIS OF SER-260</scope>
</reference>
<reference key="60">
    <citation type="journal article" date="2018" name="Nat. Commun.">
        <title>PAXX and its paralogs synergistically direct DNA polymerase lambda activity in DNA repair.</title>
        <authorList>
            <person name="Craxton A."/>
            <person name="Munnur D."/>
            <person name="Jukes-Jones R."/>
            <person name="Skalka G."/>
            <person name="Langlais C."/>
            <person name="Cain K."/>
            <person name="Malewicz M."/>
        </authorList>
    </citation>
    <scope>INTERACTION WITH POLL</scope>
</reference>
<reference key="61">
    <citation type="journal article" date="2021" name="Mol. Cell">
        <title>Caspase cleavage releases a nuclear protein fragment that stimulates phospholipid scrambling at the plasma membrane.</title>
        <authorList>
            <person name="Maruoka M."/>
            <person name="Zhang P."/>
            <person name="Mori H."/>
            <person name="Imanishi E."/>
            <person name="Packwood D.M."/>
            <person name="Harada H."/>
            <person name="Kosako H."/>
            <person name="Suzuki J."/>
        </authorList>
    </citation>
    <scope>FUNCTION</scope>
    <scope>SUBCELLULAR LOCATION</scope>
    <scope>PROTEOLYTIC CLEAVAGE</scope>
    <scope>MUTAGENESIS OF 262-ASP--ASP-265; ILE-266; ARG-270; LYS-271; ARG-272; ARG-273 AND ARG-275</scope>
</reference>
<reference evidence="74" key="62">
    <citation type="journal article" date="2000" name="EMBO J.">
        <title>Crystal structure of the Xrcc4 DNA repair protein and implications for end joining.</title>
        <authorList>
            <person name="Junop M.S."/>
            <person name="Modesti M."/>
            <person name="Guarne A."/>
            <person name="Ghirlando R."/>
            <person name="Gellert M."/>
            <person name="Yang W."/>
        </authorList>
    </citation>
    <scope>X-RAY CRYSTALLOGRAPHY (2.70 ANGSTROMS) OF 1-203</scope>
    <scope>SUBUNIT</scope>
</reference>
<reference key="63">
    <citation type="journal article" date="2001" name="Nat. Struct. Biol.">
        <title>Crystal structure of an Xrcc4-DNA ligase IV complex.</title>
        <authorList>
            <person name="Sibanda B.L."/>
            <person name="Critchlow S.E."/>
            <person name="Begun J."/>
            <person name="Pei X.Y."/>
            <person name="Jackson S.P."/>
            <person name="Blundell T.L."/>
            <person name="Pellegrini L."/>
        </authorList>
    </citation>
    <scope>X-RAY CRYSTALLOGRAPHY (2.3 ANGSTROMS) OF 1-113 IN COMPLEX WITH LIG4</scope>
</reference>
<reference key="64">
    <citation type="journal article" date="2003" name="J. Mol. Biol.">
        <title>Tetramerization and DNA ligase IV interaction of the DNA double-strand break repair protein XRCC4 are mutually exclusive.</title>
        <authorList>
            <person name="Modesti M."/>
            <person name="Junop M.S."/>
            <person name="Ghirlando R."/>
            <person name="van de Rakt M."/>
            <person name="Gellert M."/>
            <person name="Yang W."/>
            <person name="Kanaar R."/>
        </authorList>
    </citation>
    <scope>X-RAY CRYSTALLOGRAPHY (2.7 ANGSTROMS) OF 1-203</scope>
</reference>
<reference evidence="75" key="65">
    <citation type="journal article" date="2009" name="Mol. Cell. Biol.">
        <title>Structural and functional interaction between the human DNA repair proteins DNA ligase IV and XRCC4.</title>
        <authorList>
            <person name="Wu P.Y."/>
            <person name="Frit P."/>
            <person name="Meesala S."/>
            <person name="Dauvillier S."/>
            <person name="Modesti M."/>
            <person name="Andres S.N."/>
            <person name="Huang Y."/>
            <person name="Sekiguchi J."/>
            <person name="Calsou P."/>
            <person name="Salles B."/>
            <person name="Junop M.S."/>
        </authorList>
    </citation>
    <scope>X-RAY CRYSTALLOGRAPHY (2.40 ANGSTROMS) OF 1-203 IN COMPLEX WITH LIG4</scope>
    <scope>INTERACTION WITH LIG4</scope>
</reference>
<reference evidence="79" key="66">
    <citation type="journal article" date="2011" name="Biochem. Soc. Trans.">
        <title>Non-homologous end-joining partners in a helical dance: structural studies of XLF-XRCC4 interactions.</title>
        <authorList>
            <person name="Wu Q."/>
            <person name="Ochi T."/>
            <person name="Matak-Vinkovic D."/>
            <person name="Robinson C.V."/>
            <person name="Chirgadze D.Y."/>
            <person name="Blundell T.L."/>
        </authorList>
    </citation>
    <scope>X-RAY CRYSTALLOGRAPHY (8.49 ANGSTROMS) OF 1-164 IN COMPLEX WITH NHEJ1</scope>
    <scope>INTERACTION WITH NHEJ1</scope>
</reference>
<reference evidence="78" key="67">
    <citation type="journal article" date="2011" name="J. Biol. Chem.">
        <title>XRCC4 protein interactions with XRCC4-like factor (XLF) create an extended grooved scaffold for DNA ligation and double strand break repair.</title>
        <authorList>
            <person name="Hammel M."/>
            <person name="Rey M."/>
            <person name="Yu Y."/>
            <person name="Mani R.S."/>
            <person name="Classen S."/>
            <person name="Liu M."/>
            <person name="Pique M.E."/>
            <person name="Fang S."/>
            <person name="Mahaney B.L."/>
            <person name="Weinfeld M."/>
            <person name="Schriemer D.C."/>
            <person name="Lees-Miller S.P."/>
            <person name="Tainer J.A."/>
        </authorList>
    </citation>
    <scope>X-RAY CRYSTALLOGRAPHY (3.97 ANGSTROMS) OF 1-140 IN COMPLEX WITH NHEJ1</scope>
    <scope>FUNCTION</scope>
    <scope>INTERACTION WITH NHEJ1</scope>
</reference>
<reference evidence="77" key="68">
    <citation type="journal article" date="2012" name="Nucleic Acids Res.">
        <title>A human XRCC4-XLF complex bridges DNA.</title>
        <authorList>
            <person name="Andres S.N."/>
            <person name="Vergnes A."/>
            <person name="Ristic D."/>
            <person name="Wyman C."/>
            <person name="Modesti M."/>
            <person name="Junop M."/>
        </authorList>
    </citation>
    <scope>X-RAY CRYSTALLOGRAPHY (3.94 ANGSTROMS) OF 1-157 IN COMPLEX WITH NHEJ1</scope>
    <scope>FUNCTION</scope>
    <scope>INTERACTION WITH NHEJ1</scope>
    <scope>MUTAGENESIS OF LYS-65; LYS-72; LYS-90; LYS-99; GLU-170 AND ARG-192</scope>
</reference>
<reference evidence="76" key="69">
    <citation type="journal article" date="2011" name="Proc. Natl. Acad. Sci. U.S.A.">
        <title>Structural characterization of filaments formed by human Xrcc4-Cernunnos/XLF complex involved in nonhomologous DNA end-joining.</title>
        <authorList>
            <person name="Ropars V."/>
            <person name="Drevet P."/>
            <person name="Legrand P."/>
            <person name="Baconnais S."/>
            <person name="Amram J."/>
            <person name="Faure G."/>
            <person name="Marquez J.A."/>
            <person name="Pietrement O."/>
            <person name="Guerois R."/>
            <person name="Callebaut I."/>
            <person name="Le Cam E."/>
            <person name="Revy P."/>
            <person name="de Villartay J.P."/>
            <person name="Charbonnier J.B."/>
        </authorList>
    </citation>
    <scope>X-RAY CRYSTALLOGRAPHY (5.50 ANGSTROMS) OF 1-157 IN COMPLEX WITH NHEJ1</scope>
    <scope>FUNCTION</scope>
    <scope>INTERACTION WITH NHEJ1</scope>
    <scope>MUTAGENESIS OF GLU-55; ASP-58; MET-61; GLU-62; LYS-65; GLU-69 AND PHE-106</scope>
</reference>
<reference evidence="80" key="70">
    <citation type="journal article" date="2019" name="Nat. Cell Biol.">
        <title>The nucleoskeleton protein IFFO1 immobilizes broken DNA and suppresses chromosome translocation during tumorigenesis.</title>
        <authorList>
            <person name="Li W."/>
            <person name="Bai X."/>
            <person name="Li J."/>
            <person name="Zhao Y."/>
            <person name="Liu J."/>
            <person name="Zhao H."/>
            <person name="Liu L."/>
            <person name="Ding M."/>
            <person name="Wang Q."/>
            <person name="Shi F.Y."/>
            <person name="Hou M."/>
            <person name="Ji J."/>
            <person name="Gao G."/>
            <person name="Guo R."/>
            <person name="Sun Y."/>
            <person name="Liu Y."/>
            <person name="Xu D."/>
        </authorList>
    </citation>
    <scope>X-RAY CRYSTALLOGRAPHY (2.65 ANGSTROMS) OF 1-213</scope>
    <scope>SUBUNIT</scope>
    <scope>INTERACTION WITH IFFO1</scope>
    <scope>SUBCELLULAR LOCATION</scope>
    <scope>REGION</scope>
</reference>
<reference evidence="83 84" key="71">
    <citation type="journal article" date="2021" name="Mol. Cell">
        <title>Cryo-EM of NHEJ supercomplexes provides insights into DNA repair.</title>
        <authorList>
            <person name="Chaplin A.K."/>
            <person name="Hardwick S.W."/>
            <person name="Stavridi A.K."/>
            <person name="Buehl C.J."/>
            <person name="Goff N.J."/>
            <person name="Ropars V."/>
            <person name="Liang S."/>
            <person name="De Oliveira T.M."/>
            <person name="Chirgadze D.Y."/>
            <person name="Meek K."/>
            <person name="Charbonnier J.B."/>
            <person name="Blundell T.L."/>
        </authorList>
    </citation>
    <scope>STRUCTURE BY ELECTRON MICROSCOPY (4.14 ANGSTROMS) IN COMPLEX WITH THE NHEJ COMPLEX AND DNA</scope>
    <scope>IDENTIFICATION IN THE NHEJ COMPLEX</scope>
</reference>
<reference evidence="81 82" key="72">
    <citation type="journal article" date="2021" name="Nature">
        <title>Structural basis of long-range to short-range synaptic transition in NHEJ.</title>
        <authorList>
            <person name="Chen S."/>
            <person name="Lee L."/>
            <person name="Naila T."/>
            <person name="Fishbain S."/>
            <person name="Wang A."/>
            <person name="Tomkinson A.E."/>
            <person name="Lees-Miller S.P."/>
            <person name="He Y."/>
        </authorList>
    </citation>
    <scope>STRUCTURE BY ELECTRON MICROSCOPY (4.6 ANGSTROMS) IN COMPLEX WITH THE NHEJ COMPLEX</scope>
    <scope>IDENTIFICATION IN THE NHEJ COMPLEX</scope>
</reference>
<reference key="73">
    <citation type="journal article" date="2015" name="Am. J. Hum. Genet.">
        <title>Mutations in the NHEJ component XRCC4 cause primordial dwarfism.</title>
        <authorList>
            <person name="Murray J.E."/>
            <person name="van der Burg M."/>
            <person name="Ijspeert H."/>
            <person name="Carroll P."/>
            <person name="Wu Q."/>
            <person name="Ochi T."/>
            <person name="Leitch A."/>
            <person name="Miller E.S."/>
            <person name="Kysela B."/>
            <person name="Jawad A."/>
            <person name="Bottani A."/>
            <person name="Brancati F."/>
            <person name="Cappa M."/>
            <person name="Cormier-Daire V."/>
            <person name="Deshpande C."/>
            <person name="Faqeih E.A."/>
            <person name="Graham G.E."/>
            <person name="Ranza E."/>
            <person name="Blundell T.L."/>
            <person name="Jackson A.P."/>
            <person name="Stewart G.S."/>
            <person name="Bicknell L.S."/>
        </authorList>
    </citation>
    <scope>VARIANTS SSMED ARG-43; 161-ARG--ILE-336 DEL; 225-ARG--ILE-336 DEL AND 275-ARG--ILE-336 DEL</scope>
</reference>
<reference key="74">
    <citation type="journal article" date="2015" name="EMBO Mol. Med.">
        <title>A nonsense mutation of human XRCC4 is associated with adult-onset progressive encephalocardiomyopathy.</title>
        <authorList>
            <person name="Bee L."/>
            <person name="Nasca A."/>
            <person name="Zanolini A."/>
            <person name="Cendron F."/>
            <person name="d'Adamo P."/>
            <person name="Costa R."/>
            <person name="Lamperti C."/>
            <person name="Celotti L."/>
            <person name="Ghezzi D."/>
            <person name="Zeviani M."/>
        </authorList>
    </citation>
    <scope>VARIANT SSMED 225-ARG--ILE-336 DEL</scope>
</reference>
<reference key="75">
    <citation type="journal article" date="2015" name="Hum. Mol. Genet.">
        <title>Mutations in XRCC4 cause primary microcephaly, short stature and increased genomic instability.</title>
        <authorList>
            <person name="Rosin N."/>
            <person name="Elcioglu N.H."/>
            <person name="Beleggia F."/>
            <person name="Isgueven P."/>
            <person name="Altmueller J."/>
            <person name="Thiele H."/>
            <person name="Steindl K."/>
            <person name="Joset P."/>
            <person name="Rauch A."/>
            <person name="Nuernberg P."/>
            <person name="Wollnik B."/>
            <person name="Yigit G."/>
        </authorList>
    </citation>
    <scope>VARIANTS SSMED GLN-161 AND 275-ARG--ILE-336 DEL</scope>
    <scope>CHARACTERIZATION OF VARIANT SSMED GLN-161</scope>
</reference>
<reference key="76">
    <citation type="journal article" date="2015" name="J. Allergy Clin. Immunol.">
        <title>XRCC4 deficiency in human subjects causes a marked neurological phenotype but no overt immunodeficiency.</title>
        <authorList>
            <person name="Guo C."/>
            <person name="Nakazawa Y."/>
            <person name="Woodbine L."/>
            <person name="Bjoerkman A."/>
            <person name="Shimada M."/>
            <person name="Fawcett H."/>
            <person name="Jia N."/>
            <person name="Ohyama K."/>
            <person name="Li T.S."/>
            <person name="Nagayama Y."/>
            <person name="Mitsutake N."/>
            <person name="Pan-Hammarstroem Q."/>
            <person name="Gennery A.R."/>
            <person name="Lehmann A.R."/>
            <person name="Jeggo P.A."/>
            <person name="Ogi T."/>
        </authorList>
    </citation>
    <scope>VARIANTS SSMED ARG-43 AND 225-ARG--ILE-336 DEL</scope>
    <scope>CHARACTERIZATION OF VARIANT SSMED ARG-43</scope>
</reference>
<reference key="77">
    <citation type="journal article" date="2015" name="J. Clin. Endocrinol. Metab.">
        <title>An XRCC4 splice mutation associated with severe short stature, gonadal failure, and early-onset metabolic syndrome.</title>
        <authorList>
            <person name="de Bruin C."/>
            <person name="Mericq V."/>
            <person name="Andrew S.F."/>
            <person name="van Duyvenvoorde H.A."/>
            <person name="Verkaik N.S."/>
            <person name="Losekoot M."/>
            <person name="Porollo A."/>
            <person name="Garcia H."/>
            <person name="Kuang Y."/>
            <person name="Hanson D."/>
            <person name="Clayton P."/>
            <person name="van Gent D.C."/>
            <person name="Wit J.M."/>
            <person name="Hwa V."/>
            <person name="Dauber A."/>
        </authorList>
    </citation>
    <scope>VARIANT SSMED GLU-82</scope>
    <scope>CHARACTERIZATION OF VARIANT SSMED GLU-82</scope>
    <scope>FUNCTION</scope>
</reference>
<reference key="78">
    <citation type="journal article" date="2020" name="AACE Clin. Case Rep.">
        <title>Novel XRCC4 mutations in an infant with microcephalic primordial dwarfism, dilated cardiomyopathy, subclinical hypothyroidism, and early death: expanding the phenotype of XRCC4 mutations.</title>
        <authorList>
            <person name="Fredette M.E."/>
            <person name="Lombardi K.C."/>
            <person name="Duker A.L."/>
            <person name="Buck C.O."/>
            <person name="Phornphutkul C."/>
            <person name="Bober M.B."/>
            <person name="Quintos J.B."/>
        </authorList>
    </citation>
    <scope>VARIANT SSMED 210-LYS--ILE-336 DEL</scope>
</reference>
<protein>
    <recommendedName>
        <fullName evidence="70">DNA repair protein XRCC4</fullName>
        <shortName evidence="65">hXRCC4</shortName>
    </recommendedName>
    <alternativeName>
        <fullName evidence="68">X-ray repair cross-complementing protein 4</fullName>
    </alternativeName>
    <component>
        <recommendedName>
            <fullName evidence="72">Protein XRCC4, C-terminus</fullName>
            <shortName evidence="67">XRCC4/C</shortName>
        </recommendedName>
    </component>
</protein>
<keyword id="KW-0002">3D-structure</keyword>
<keyword id="KW-0025">Alternative splicing</keyword>
<keyword id="KW-0158">Chromosome</keyword>
<keyword id="KW-0175">Coiled coil</keyword>
<keyword id="KW-0963">Cytoplasm</keyword>
<keyword id="KW-0225">Disease variant</keyword>
<keyword id="KW-0227">DNA damage</keyword>
<keyword id="KW-0233">DNA recombination</keyword>
<keyword id="KW-0234">DNA repair</keyword>
<keyword id="KW-0238">DNA-binding</keyword>
<keyword id="KW-0242">Dwarfism</keyword>
<keyword id="KW-1017">Isopeptide bond</keyword>
<keyword id="KW-0539">Nucleus</keyword>
<keyword id="KW-0597">Phosphoprotein</keyword>
<keyword id="KW-1267">Proteomics identification</keyword>
<keyword id="KW-1185">Reference proteome</keyword>
<keyword id="KW-0832">Ubl conjugation</keyword>
<organism>
    <name type="scientific">Homo sapiens</name>
    <name type="common">Human</name>
    <dbReference type="NCBI Taxonomy" id="9606"/>
    <lineage>
        <taxon>Eukaryota</taxon>
        <taxon>Metazoa</taxon>
        <taxon>Chordata</taxon>
        <taxon>Craniata</taxon>
        <taxon>Vertebrata</taxon>
        <taxon>Euteleostomi</taxon>
        <taxon>Mammalia</taxon>
        <taxon>Eutheria</taxon>
        <taxon>Euarchontoglires</taxon>
        <taxon>Primates</taxon>
        <taxon>Haplorrhini</taxon>
        <taxon>Catarrhini</taxon>
        <taxon>Hominidae</taxon>
        <taxon>Homo</taxon>
    </lineage>
</organism>
<gene>
    <name evidence="68 73" type="primary">XRCC4</name>
</gene>
<dbReference type="EMBL" id="U40622">
    <property type="protein sequence ID" value="AAC50339.1"/>
    <property type="molecule type" value="mRNA"/>
</dbReference>
<dbReference type="EMBL" id="AF055285">
    <property type="protein sequence ID" value="AAD47297.1"/>
    <property type="molecule type" value="Genomic_DNA"/>
</dbReference>
<dbReference type="EMBL" id="AF055279">
    <property type="protein sequence ID" value="AAD47297.1"/>
    <property type="status" value="JOINED"/>
    <property type="molecule type" value="Genomic_DNA"/>
</dbReference>
<dbReference type="EMBL" id="AF055280">
    <property type="protein sequence ID" value="AAD47297.1"/>
    <property type="status" value="JOINED"/>
    <property type="molecule type" value="Genomic_DNA"/>
</dbReference>
<dbReference type="EMBL" id="AF055281">
    <property type="protein sequence ID" value="AAD47297.1"/>
    <property type="status" value="JOINED"/>
    <property type="molecule type" value="Genomic_DNA"/>
</dbReference>
<dbReference type="EMBL" id="AF055282">
    <property type="protein sequence ID" value="AAD47297.1"/>
    <property type="status" value="JOINED"/>
    <property type="molecule type" value="Genomic_DNA"/>
</dbReference>
<dbReference type="EMBL" id="AF055283">
    <property type="protein sequence ID" value="AAD47297.1"/>
    <property type="status" value="JOINED"/>
    <property type="molecule type" value="Genomic_DNA"/>
</dbReference>
<dbReference type="EMBL" id="AF055284">
    <property type="protein sequence ID" value="AAD47297.1"/>
    <property type="status" value="JOINED"/>
    <property type="molecule type" value="Genomic_DNA"/>
</dbReference>
<dbReference type="EMBL" id="AF055285">
    <property type="protein sequence ID" value="AAD47298.1"/>
    <property type="molecule type" value="Genomic_DNA"/>
</dbReference>
<dbReference type="EMBL" id="AF055279">
    <property type="protein sequence ID" value="AAD47298.1"/>
    <property type="status" value="JOINED"/>
    <property type="molecule type" value="Genomic_DNA"/>
</dbReference>
<dbReference type="EMBL" id="AF055280">
    <property type="protein sequence ID" value="AAD47298.1"/>
    <property type="status" value="JOINED"/>
    <property type="molecule type" value="Genomic_DNA"/>
</dbReference>
<dbReference type="EMBL" id="AF055281">
    <property type="protein sequence ID" value="AAD47298.1"/>
    <property type="status" value="JOINED"/>
    <property type="molecule type" value="Genomic_DNA"/>
</dbReference>
<dbReference type="EMBL" id="AF055282">
    <property type="protein sequence ID" value="AAD47298.1"/>
    <property type="status" value="JOINED"/>
    <property type="molecule type" value="Genomic_DNA"/>
</dbReference>
<dbReference type="EMBL" id="AF055283">
    <property type="protein sequence ID" value="AAD47298.1"/>
    <property type="status" value="JOINED"/>
    <property type="molecule type" value="Genomic_DNA"/>
</dbReference>
<dbReference type="EMBL" id="AF055284">
    <property type="protein sequence ID" value="AAD47298.1"/>
    <property type="status" value="JOINED"/>
    <property type="molecule type" value="Genomic_DNA"/>
</dbReference>
<dbReference type="EMBL" id="AB017445">
    <property type="protein sequence ID" value="BAB20668.1"/>
    <property type="molecule type" value="mRNA"/>
</dbReference>
<dbReference type="EMBL" id="BT007216">
    <property type="protein sequence ID" value="AAP35880.1"/>
    <property type="molecule type" value="mRNA"/>
</dbReference>
<dbReference type="EMBL" id="AK290739">
    <property type="protein sequence ID" value="BAF83428.1"/>
    <property type="molecule type" value="mRNA"/>
</dbReference>
<dbReference type="EMBL" id="AY940097">
    <property type="protein sequence ID" value="AAX14046.1"/>
    <property type="molecule type" value="Genomic_DNA"/>
</dbReference>
<dbReference type="EMBL" id="CH471084">
    <property type="protein sequence ID" value="EAW95898.1"/>
    <property type="molecule type" value="Genomic_DNA"/>
</dbReference>
<dbReference type="EMBL" id="BC005259">
    <property type="protein sequence ID" value="AAH05259.1"/>
    <property type="molecule type" value="mRNA"/>
</dbReference>
<dbReference type="EMBL" id="BC016314">
    <property type="protein sequence ID" value="AAH16314.1"/>
    <property type="molecule type" value="mRNA"/>
</dbReference>
<dbReference type="CCDS" id="CCDS4058.1">
    <molecule id="Q13426-2"/>
</dbReference>
<dbReference type="CCDS" id="CCDS4059.1">
    <molecule id="Q13426-1"/>
</dbReference>
<dbReference type="RefSeq" id="NP_001304941.1">
    <molecule id="Q13426-1"/>
    <property type="nucleotide sequence ID" value="NM_001318012.3"/>
</dbReference>
<dbReference type="RefSeq" id="NP_001304942.1">
    <molecule id="Q13426-3"/>
    <property type="nucleotide sequence ID" value="NM_001318013.2"/>
</dbReference>
<dbReference type="RefSeq" id="NP_003392.1">
    <molecule id="Q13426-2"/>
    <property type="nucleotide sequence ID" value="NM_003401.5"/>
</dbReference>
<dbReference type="RefSeq" id="NP_071801.1">
    <molecule id="Q13426-1"/>
    <property type="nucleotide sequence ID" value="NM_022406.5"/>
</dbReference>
<dbReference type="RefSeq" id="NP_072044.1">
    <molecule id="Q13426-2"/>
    <property type="nucleotide sequence ID" value="NM_022550.4"/>
</dbReference>
<dbReference type="RefSeq" id="XP_011541928.1">
    <molecule id="Q13426-1"/>
    <property type="nucleotide sequence ID" value="XM_011543626.2"/>
</dbReference>
<dbReference type="RefSeq" id="XP_047273650.1">
    <molecule id="Q13426-2"/>
    <property type="nucleotide sequence ID" value="XM_047417694.1"/>
</dbReference>
<dbReference type="RefSeq" id="XP_047273652.1">
    <molecule id="Q13426-3"/>
    <property type="nucleotide sequence ID" value="XM_047417696.1"/>
</dbReference>
<dbReference type="RefSeq" id="XP_054209404.1">
    <molecule id="Q13426-1"/>
    <property type="nucleotide sequence ID" value="XM_054353429.1"/>
</dbReference>
<dbReference type="RefSeq" id="XP_054209405.1">
    <molecule id="Q13426-2"/>
    <property type="nucleotide sequence ID" value="XM_054353430.1"/>
</dbReference>
<dbReference type="RefSeq" id="XP_054209408.1">
    <molecule id="Q13426-3"/>
    <property type="nucleotide sequence ID" value="XM_054353433.1"/>
</dbReference>
<dbReference type="PDB" id="1FU1">
    <property type="method" value="X-ray"/>
    <property type="resolution" value="2.70 A"/>
    <property type="chains" value="A/B=1-203"/>
</dbReference>
<dbReference type="PDB" id="1IK9">
    <property type="method" value="X-ray"/>
    <property type="resolution" value="2.30 A"/>
    <property type="chains" value="A/B=1-213"/>
</dbReference>
<dbReference type="PDB" id="3II6">
    <property type="method" value="X-ray"/>
    <property type="resolution" value="2.40 A"/>
    <property type="chains" value="A/B/C/D=1-203"/>
</dbReference>
<dbReference type="PDB" id="3MUD">
    <property type="method" value="X-ray"/>
    <property type="resolution" value="2.20 A"/>
    <property type="chains" value="A/B=2-133"/>
</dbReference>
<dbReference type="PDB" id="3Q4F">
    <property type="method" value="X-ray"/>
    <property type="resolution" value="5.50 A"/>
    <property type="chains" value="C/D/G/H=1-157"/>
</dbReference>
<dbReference type="PDB" id="3RWR">
    <property type="method" value="X-ray"/>
    <property type="resolution" value="3.94 A"/>
    <property type="chains" value="A/B/F/G/J/K/N/P/R/U/V/Y=1-157"/>
</dbReference>
<dbReference type="PDB" id="3SR2">
    <property type="method" value="X-ray"/>
    <property type="resolution" value="3.97 A"/>
    <property type="chains" value="A/B/E/F=1-140"/>
</dbReference>
<dbReference type="PDB" id="3W03">
    <property type="method" value="X-ray"/>
    <property type="resolution" value="8.49 A"/>
    <property type="chains" value="C/D=1-164"/>
</dbReference>
<dbReference type="PDB" id="4XA4">
    <property type="method" value="X-ray"/>
    <property type="resolution" value="2.33 A"/>
    <property type="chains" value="A/B=2-147"/>
</dbReference>
<dbReference type="PDB" id="5CHX">
    <property type="method" value="X-ray"/>
    <property type="resolution" value="2.30 A"/>
    <property type="chains" value="A/B=2-143"/>
</dbReference>
<dbReference type="PDB" id="5CJ0">
    <property type="method" value="X-ray"/>
    <property type="resolution" value="2.30 A"/>
    <property type="chains" value="A/B=2-142"/>
</dbReference>
<dbReference type="PDB" id="5CJ4">
    <property type="method" value="X-ray"/>
    <property type="resolution" value="3.10 A"/>
    <property type="chains" value="A/B/C/D=2-144"/>
</dbReference>
<dbReference type="PDB" id="5E50">
    <property type="method" value="X-ray"/>
    <property type="resolution" value="1.38 A"/>
    <property type="chains" value="C/D=229-236"/>
</dbReference>
<dbReference type="PDB" id="5WJ7">
    <property type="method" value="X-ray"/>
    <property type="resolution" value="2.50 A"/>
    <property type="chains" value="A/B=2-132"/>
</dbReference>
<dbReference type="PDB" id="5WLZ">
    <property type="method" value="X-ray"/>
    <property type="resolution" value="3.50 A"/>
    <property type="chains" value="A/B/C/D=2-132"/>
</dbReference>
<dbReference type="PDB" id="6ABO">
    <property type="method" value="X-ray"/>
    <property type="resolution" value="2.65 A"/>
    <property type="chains" value="A=1-213"/>
</dbReference>
<dbReference type="PDB" id="7LSY">
    <property type="method" value="EM"/>
    <property type="resolution" value="8.40 A"/>
    <property type="chains" value="F/G/O/P=1-336"/>
</dbReference>
<dbReference type="PDB" id="7LT3">
    <property type="method" value="EM"/>
    <property type="resolution" value="4.60 A"/>
    <property type="chains" value="F/G/O/P=1-336"/>
</dbReference>
<dbReference type="PDB" id="7M3P">
    <property type="method" value="X-ray"/>
    <property type="resolution" value="2.00 A"/>
    <property type="chains" value="A/B=2-132"/>
</dbReference>
<dbReference type="PDB" id="7NFC">
    <property type="method" value="EM"/>
    <property type="resolution" value="4.14 A"/>
    <property type="chains" value="K/L/N/O=1-336"/>
</dbReference>
<dbReference type="PDB" id="7NFE">
    <property type="method" value="EM"/>
    <property type="resolution" value="4.29 A"/>
    <property type="chains" value="H/I=1-336"/>
</dbReference>
<dbReference type="PDB" id="8BH3">
    <property type="method" value="EM"/>
    <property type="resolution" value="4.55 A"/>
    <property type="chains" value="G/H/P/Q=1-336"/>
</dbReference>
<dbReference type="PDB" id="8BHV">
    <property type="method" value="EM"/>
    <property type="resolution" value="4.51 A"/>
    <property type="chains" value="K/L/N/O=1-336"/>
</dbReference>
<dbReference type="PDB" id="8BHY">
    <property type="method" value="EM"/>
    <property type="resolution" value="5.33 A"/>
    <property type="chains" value="G/H/P/Q=1-336"/>
</dbReference>
<dbReference type="PDB" id="8BOT">
    <property type="method" value="EM"/>
    <property type="resolution" value="7.76 A"/>
    <property type="chains" value="K/L/N/O=1-336"/>
</dbReference>
<dbReference type="PDB" id="8EZA">
    <property type="method" value="EM"/>
    <property type="resolution" value="4.39 A"/>
    <property type="chains" value="F/G/O/P=1-336"/>
</dbReference>
<dbReference type="PDB" id="8EZB">
    <property type="method" value="EM"/>
    <property type="resolution" value="8.90 A"/>
    <property type="chains" value="F/G/O/P=1-336"/>
</dbReference>
<dbReference type="PDBsum" id="1FU1"/>
<dbReference type="PDBsum" id="1IK9"/>
<dbReference type="PDBsum" id="3II6"/>
<dbReference type="PDBsum" id="3MUD"/>
<dbReference type="PDBsum" id="3Q4F"/>
<dbReference type="PDBsum" id="3RWR"/>
<dbReference type="PDBsum" id="3SR2"/>
<dbReference type="PDBsum" id="3W03"/>
<dbReference type="PDBsum" id="4XA4"/>
<dbReference type="PDBsum" id="5CHX"/>
<dbReference type="PDBsum" id="5CJ0"/>
<dbReference type="PDBsum" id="5CJ4"/>
<dbReference type="PDBsum" id="5E50"/>
<dbReference type="PDBsum" id="5WJ7"/>
<dbReference type="PDBsum" id="5WLZ"/>
<dbReference type="PDBsum" id="6ABO"/>
<dbReference type="PDBsum" id="7LSY"/>
<dbReference type="PDBsum" id="7LT3"/>
<dbReference type="PDBsum" id="7M3P"/>
<dbReference type="PDBsum" id="7NFC"/>
<dbReference type="PDBsum" id="7NFE"/>
<dbReference type="PDBsum" id="8BH3"/>
<dbReference type="PDBsum" id="8BHV"/>
<dbReference type="PDBsum" id="8BHY"/>
<dbReference type="PDBsum" id="8BOT"/>
<dbReference type="PDBsum" id="8EZA"/>
<dbReference type="PDBsum" id="8EZB"/>
<dbReference type="EMDB" id="EMD-12299"/>
<dbReference type="EMDB" id="EMD-12301"/>
<dbReference type="EMDB" id="EMD-16044"/>
<dbReference type="EMDB" id="EMD-16070"/>
<dbReference type="EMDB" id="EMD-16074"/>
<dbReference type="EMDB" id="EMD-16145"/>
<dbReference type="EMDB" id="EMD-23509"/>
<dbReference type="EMDB" id="EMD-23510"/>
<dbReference type="EMDB" id="EMD-23512"/>
<dbReference type="EMDB" id="EMD-23515"/>
<dbReference type="EMDB" id="EMD-28732"/>
<dbReference type="EMDB" id="EMD-28733"/>
<dbReference type="EMDB" id="EMD-28736"/>
<dbReference type="EMDB" id="EMD-28739"/>
<dbReference type="SASBDB" id="Q13426"/>
<dbReference type="SMR" id="Q13426"/>
<dbReference type="BioGRID" id="113352">
    <property type="interactions" value="119"/>
</dbReference>
<dbReference type="ComplexPortal" id="CPX-618">
    <property type="entry name" value="DNA ligase IV complex"/>
</dbReference>
<dbReference type="CORUM" id="Q13426"/>
<dbReference type="DIP" id="DIP-37957N"/>
<dbReference type="ELM" id="Q13426"/>
<dbReference type="FunCoup" id="Q13426">
    <property type="interactions" value="1616"/>
</dbReference>
<dbReference type="IntAct" id="Q13426">
    <property type="interactions" value="51"/>
</dbReference>
<dbReference type="MINT" id="Q13426"/>
<dbReference type="STRING" id="9606.ENSP00000421491"/>
<dbReference type="ChEMBL" id="CHEMBL4296097"/>
<dbReference type="DrugBank" id="DB03963">
    <property type="generic name" value="S-(Dimethylarsenic)Cysteine"/>
</dbReference>
<dbReference type="iPTMnet" id="Q13426"/>
<dbReference type="MetOSite" id="Q13426"/>
<dbReference type="PhosphoSitePlus" id="Q13426"/>
<dbReference type="BioMuta" id="XRCC4"/>
<dbReference type="DMDM" id="44888352"/>
<dbReference type="jPOST" id="Q13426"/>
<dbReference type="MassIVE" id="Q13426"/>
<dbReference type="PaxDb" id="9606-ENSP00000421491"/>
<dbReference type="PeptideAtlas" id="Q13426"/>
<dbReference type="ProteomicsDB" id="59412">
    <molecule id="Q13426-1"/>
</dbReference>
<dbReference type="ProteomicsDB" id="59413">
    <molecule id="Q13426-2"/>
</dbReference>
<dbReference type="ProteomicsDB" id="59414">
    <molecule id="Q13426-3"/>
</dbReference>
<dbReference type="Pumba" id="Q13426"/>
<dbReference type="Antibodypedia" id="1873">
    <property type="antibodies" value="452 antibodies from 34 providers"/>
</dbReference>
<dbReference type="DNASU" id="7518"/>
<dbReference type="Ensembl" id="ENST00000282268.7">
    <molecule id="Q13426-2"/>
    <property type="protein sequence ID" value="ENSP00000282268.3"/>
    <property type="gene ID" value="ENSG00000152422.16"/>
</dbReference>
<dbReference type="Ensembl" id="ENST00000338635.10">
    <molecule id="Q13426-1"/>
    <property type="protein sequence ID" value="ENSP00000342011.6"/>
    <property type="gene ID" value="ENSG00000152422.16"/>
</dbReference>
<dbReference type="Ensembl" id="ENST00000396027.9">
    <molecule id="Q13426-2"/>
    <property type="protein sequence ID" value="ENSP00000379344.4"/>
    <property type="gene ID" value="ENSG00000152422.16"/>
</dbReference>
<dbReference type="Ensembl" id="ENST00000511817.1">
    <molecule id="Q13426-1"/>
    <property type="protein sequence ID" value="ENSP00000421491.1"/>
    <property type="gene ID" value="ENSG00000152422.16"/>
</dbReference>
<dbReference type="GeneID" id="7518"/>
<dbReference type="KEGG" id="hsa:7518"/>
<dbReference type="MANE-Select" id="ENST00000396027.9">
    <molecule id="Q13426-2"/>
    <property type="protein sequence ID" value="ENSP00000379344.4"/>
    <property type="RefSeq nucleotide sequence ID" value="NM_003401.5"/>
    <property type="RefSeq protein sequence ID" value="NP_003392.1"/>
</dbReference>
<dbReference type="UCSC" id="uc003kib.4">
    <molecule id="Q13426-1"/>
    <property type="organism name" value="human"/>
</dbReference>
<dbReference type="AGR" id="HGNC:12831"/>
<dbReference type="CTD" id="7518"/>
<dbReference type="DisGeNET" id="7518"/>
<dbReference type="GeneCards" id="XRCC4"/>
<dbReference type="HGNC" id="HGNC:12831">
    <property type="gene designation" value="XRCC4"/>
</dbReference>
<dbReference type="HPA" id="ENSG00000152422">
    <property type="expression patterns" value="Low tissue specificity"/>
</dbReference>
<dbReference type="MalaCards" id="XRCC4"/>
<dbReference type="MIM" id="194363">
    <property type="type" value="gene"/>
</dbReference>
<dbReference type="MIM" id="616541">
    <property type="type" value="phenotype"/>
</dbReference>
<dbReference type="neXtProt" id="NX_Q13426"/>
<dbReference type="OpenTargets" id="ENSG00000152422"/>
<dbReference type="Orphanet" id="99812">
    <property type="disease" value="LIG4 syndrome"/>
</dbReference>
<dbReference type="Orphanet" id="436182">
    <property type="disease" value="Microcephalic primordial dwarfism-insulin resistance syndrome"/>
</dbReference>
<dbReference type="PharmGKB" id="PA37423"/>
<dbReference type="VEuPathDB" id="HostDB:ENSG00000152422"/>
<dbReference type="eggNOG" id="ENOG502QWJA">
    <property type="taxonomic scope" value="Eukaryota"/>
</dbReference>
<dbReference type="GeneTree" id="ENSGT00390000017079"/>
<dbReference type="HOGENOM" id="CLU_072334_0_0_1"/>
<dbReference type="InParanoid" id="Q13426"/>
<dbReference type="OMA" id="FIKGTWF"/>
<dbReference type="OrthoDB" id="8064436at2759"/>
<dbReference type="PAN-GO" id="Q13426">
    <property type="GO annotations" value="7 GO annotations based on evolutionary models"/>
</dbReference>
<dbReference type="PhylomeDB" id="Q13426"/>
<dbReference type="TreeFam" id="TF101204"/>
<dbReference type="PathwayCommons" id="Q13426"/>
<dbReference type="Reactome" id="R-HSA-164843">
    <property type="pathway name" value="2-LTR circle formation"/>
</dbReference>
<dbReference type="Reactome" id="R-HSA-3108214">
    <property type="pathway name" value="SUMOylation of DNA damage response and repair proteins"/>
</dbReference>
<dbReference type="Reactome" id="R-HSA-5693571">
    <property type="pathway name" value="Nonhomologous End-Joining (NHEJ)"/>
</dbReference>
<dbReference type="SignaLink" id="Q13426"/>
<dbReference type="SIGNOR" id="Q13426"/>
<dbReference type="BioGRID-ORCS" id="7518">
    <property type="hits" value="87 hits in 1160 CRISPR screens"/>
</dbReference>
<dbReference type="ChiTaRS" id="XRCC4">
    <property type="organism name" value="human"/>
</dbReference>
<dbReference type="EvolutionaryTrace" id="Q13426"/>
<dbReference type="GeneWiki" id="XRCC4"/>
<dbReference type="GenomeRNAi" id="7518"/>
<dbReference type="Pharos" id="Q13426">
    <property type="development level" value="Tbio"/>
</dbReference>
<dbReference type="PRO" id="PR:Q13426"/>
<dbReference type="Proteomes" id="UP000005640">
    <property type="component" value="Chromosome 5"/>
</dbReference>
<dbReference type="RNAct" id="Q13426">
    <property type="molecule type" value="protein"/>
</dbReference>
<dbReference type="Bgee" id="ENSG00000152422">
    <property type="expression patterns" value="Expressed in male germ line stem cell (sensu Vertebrata) in testis and 155 other cell types or tissues"/>
</dbReference>
<dbReference type="ExpressionAtlas" id="Q13426">
    <property type="expression patterns" value="baseline and differential"/>
</dbReference>
<dbReference type="GO" id="GO:0005829">
    <property type="term" value="C:cytosol"/>
    <property type="evidence" value="ECO:0000314"/>
    <property type="project" value="UniProtKB"/>
</dbReference>
<dbReference type="GO" id="GO:0032807">
    <property type="term" value="C:DNA ligase IV complex"/>
    <property type="evidence" value="ECO:0000314"/>
    <property type="project" value="UniProtKB"/>
</dbReference>
<dbReference type="GO" id="GO:0005958">
    <property type="term" value="C:DNA-dependent protein kinase-DNA ligase 4 complex"/>
    <property type="evidence" value="ECO:0000314"/>
    <property type="project" value="UniProtKB"/>
</dbReference>
<dbReference type="GO" id="GO:0070419">
    <property type="term" value="C:nonhomologous end joining complex"/>
    <property type="evidence" value="ECO:0000314"/>
    <property type="project" value="UniProtKB"/>
</dbReference>
<dbReference type="GO" id="GO:0005654">
    <property type="term" value="C:nucleoplasm"/>
    <property type="evidence" value="ECO:0000314"/>
    <property type="project" value="HPA"/>
</dbReference>
<dbReference type="GO" id="GO:0005634">
    <property type="term" value="C:nucleus"/>
    <property type="evidence" value="ECO:0000314"/>
    <property type="project" value="UniProtKB"/>
</dbReference>
<dbReference type="GO" id="GO:0035861">
    <property type="term" value="C:site of double-strand break"/>
    <property type="evidence" value="ECO:0000314"/>
    <property type="project" value="UniProtKB"/>
</dbReference>
<dbReference type="GO" id="GO:0003677">
    <property type="term" value="F:DNA binding"/>
    <property type="evidence" value="ECO:0000269"/>
    <property type="project" value="DisProt"/>
</dbReference>
<dbReference type="GO" id="GO:0019899">
    <property type="term" value="F:enzyme binding"/>
    <property type="evidence" value="ECO:0000353"/>
    <property type="project" value="BHF-UCL"/>
</dbReference>
<dbReference type="GO" id="GO:0070975">
    <property type="term" value="F:FHA domain binding"/>
    <property type="evidence" value="ECO:0000353"/>
    <property type="project" value="UniProtKB"/>
</dbReference>
<dbReference type="GO" id="GO:0042802">
    <property type="term" value="F:identical protein binding"/>
    <property type="evidence" value="ECO:0000353"/>
    <property type="project" value="IntAct"/>
</dbReference>
<dbReference type="GO" id="GO:0006284">
    <property type="term" value="P:base-excision repair"/>
    <property type="evidence" value="ECO:0000314"/>
    <property type="project" value="BHF-UCL"/>
</dbReference>
<dbReference type="GO" id="GO:0071285">
    <property type="term" value="P:cellular response to lithium ion"/>
    <property type="evidence" value="ECO:0007669"/>
    <property type="project" value="Ensembl"/>
</dbReference>
<dbReference type="GO" id="GO:0006302">
    <property type="term" value="P:double-strand break repair"/>
    <property type="evidence" value="ECO:0000314"/>
    <property type="project" value="UniProtKB"/>
</dbReference>
<dbReference type="GO" id="GO:0006303">
    <property type="term" value="P:double-strand break repair via nonhomologous end joining"/>
    <property type="evidence" value="ECO:0000314"/>
    <property type="project" value="UniProtKB"/>
</dbReference>
<dbReference type="GO" id="GO:0033152">
    <property type="term" value="P:immunoglobulin V(D)J recombination"/>
    <property type="evidence" value="ECO:0000318"/>
    <property type="project" value="GO_Central"/>
</dbReference>
<dbReference type="GO" id="GO:0051351">
    <property type="term" value="P:positive regulation of ligase activity"/>
    <property type="evidence" value="ECO:0000314"/>
    <property type="project" value="UniProtKB"/>
</dbReference>
<dbReference type="GO" id="GO:1990166">
    <property type="term" value="P:protein localization to site of double-strand break"/>
    <property type="evidence" value="ECO:0000314"/>
    <property type="project" value="UniProtKB"/>
</dbReference>
<dbReference type="GO" id="GO:0010165">
    <property type="term" value="P:response to X-ray"/>
    <property type="evidence" value="ECO:0000314"/>
    <property type="project" value="UniProtKB"/>
</dbReference>
<dbReference type="CDD" id="cd22283">
    <property type="entry name" value="HD_XRCC4_N"/>
    <property type="match status" value="1"/>
</dbReference>
<dbReference type="DisProt" id="DP00152"/>
<dbReference type="FunFam" id="2.170.210.10:FF:000002">
    <property type="entry name" value="DNA repair protein XRCC4"/>
    <property type="match status" value="1"/>
</dbReference>
<dbReference type="FunFam" id="1.20.5.370:FF:000011">
    <property type="entry name" value="DNA repair protein XRCC4 isoform X2"/>
    <property type="match status" value="1"/>
</dbReference>
<dbReference type="Gene3D" id="1.20.5.370">
    <property type="match status" value="1"/>
</dbReference>
<dbReference type="Gene3D" id="2.170.210.10">
    <property type="entry name" value="DNA double-strand break repair and VJ recombination XRCC4, N-terminal"/>
    <property type="match status" value="1"/>
</dbReference>
<dbReference type="InterPro" id="IPR010585">
    <property type="entry name" value="DNA_repair_prot_XRCC4"/>
</dbReference>
<dbReference type="InterPro" id="IPR014751">
    <property type="entry name" value="XRCC4-like_C"/>
</dbReference>
<dbReference type="InterPro" id="IPR038051">
    <property type="entry name" value="XRCC4-like_N_sf"/>
</dbReference>
<dbReference type="InterPro" id="IPR053963">
    <property type="entry name" value="XRCC4_C"/>
</dbReference>
<dbReference type="InterPro" id="IPR053962">
    <property type="entry name" value="XRCC4_CC"/>
</dbReference>
<dbReference type="InterPro" id="IPR053961">
    <property type="entry name" value="XRCC4_N"/>
</dbReference>
<dbReference type="InterPro" id="IPR009089">
    <property type="entry name" value="XRCC4_N_sf"/>
</dbReference>
<dbReference type="PANTHER" id="PTHR28559">
    <property type="entry name" value="DNA REPAIR PROTEIN XRCC4"/>
    <property type="match status" value="1"/>
</dbReference>
<dbReference type="PANTHER" id="PTHR28559:SF1">
    <property type="entry name" value="DNA REPAIR PROTEIN XRCC4"/>
    <property type="match status" value="1"/>
</dbReference>
<dbReference type="Pfam" id="PF06632">
    <property type="entry name" value="XRCC4"/>
    <property type="match status" value="1"/>
</dbReference>
<dbReference type="Pfam" id="PF21925">
    <property type="entry name" value="XRCC4_C"/>
    <property type="match status" value="1"/>
</dbReference>
<dbReference type="Pfam" id="PF21924">
    <property type="entry name" value="XRCC4_CC"/>
    <property type="match status" value="1"/>
</dbReference>
<dbReference type="SUPFAM" id="SSF58022">
    <property type="entry name" value="XRCC4, C-terminal oligomerization domain"/>
    <property type="match status" value="1"/>
</dbReference>
<dbReference type="SUPFAM" id="SSF50809">
    <property type="entry name" value="XRCC4, N-terminal domain"/>
    <property type="match status" value="1"/>
</dbReference>
<comment type="function">
    <molecule>DNA repair protein XRCC4</molecule>
    <text evidence="3 4 8 13 14 17 18 25 27 28 29 31 32 33 38 41 44 46 49 50 51 52 60 61">DNA non-homologous end joining (NHEJ) core factor, required for double-strand break repair and V(D)J recombination (PubMed:10757784, PubMed:10854421, PubMed:12517771, PubMed:16412978, PubMed:17124166, PubMed:17290226, PubMed:22228831, PubMed:25597996, PubMed:25742519, PubMed:25934149, PubMed:26100018, PubMed:26774286, PubMed:8548796). Acts as a scaffold protein that regulates recruitment of other proteins to DNA double-strand breaks (DSBs) (PubMed:15385968, PubMed:20852255, PubMed:26774286, PubMed:27437582). Associates with NHEJ1/XLF to form alternating helical filaments that bridge DNA and act like a bandage, holding together the broken DNA until it is repaired (PubMed:21768349, PubMed:21775435, PubMed:22287571, PubMed:26100018, PubMed:27437582, PubMed:28500754). The XRCC4-NHEJ1/XLF subcomplex binds to the DNA fragments of a DSB in a highly diffusive manner and robustly bridges two independent DNA molecules, holding the broken DNA fragments in close proximity to one other (PubMed:27437582). The mobility of the bridges ensures that the ends remain accessible for further processing by other repair factors (PubMed:27437582). Plays a key role in the NHEJ ligation step of the broken DNA during DSB repair via direct interaction with DNA ligase IV (LIG4): the LIG4-XRCC4 subcomplex reseals the DNA breaks after the gap filling is completed (PubMed:10757784, PubMed:10854421, PubMed:12517771, PubMed:17290226, PubMed:19837014, PubMed:9242410). XRCC4 stabilizes LIG4, regulates its subcellular localization and enhances LIG4's joining activity (PubMed:10757784, PubMed:10854421, PubMed:12517771, PubMed:17290226, PubMed:21982441, PubMed:22228831, PubMed:9242410). Binding of the LIG4-XRCC4 subcomplex to DNA ends is dependent on the assembly of the DNA-dependent protein kinase complex DNA-PK to these DNA ends (PubMed:10757784, PubMed:10854421). Promotes displacement of PNKP from processed strand break termini (PubMed:20852255, PubMed:28453785).</text>
</comment>
<comment type="function">
    <molecule>Protein XRCC4, C-terminus</molecule>
    <text evidence="57">Acts as an activator of the phospholipid scramblase activity of XKR4 (PubMed:33725486). This form, which is generated upon caspase-3 (CASP3) cleavage, translocates into the cytoplasm and interacts with XKR4, thereby promoting phosphatidylserine scramblase activity of XKR4 and leading to phosphatidylserine exposure on apoptotic cell surface (PubMed:33725486).</text>
</comment>
<comment type="subunit">
    <molecule>DNA repair protein XRCC4</molecule>
    <text evidence="3 4 5 6 7 8 9 12 13 15 17 18 19 20 21 22 23 24 26 27 28 29 30 31 32 33 34 36 37 39 44 45 46 49 50 51 54 55 58 59 61 62">Homodimer and homotetramer in solution (PubMed:11080143, PubMed:25574025, PubMed:25670504, PubMed:25941166, PubMed:31548606, PubMed:17567543). Interacts with NHEJ1/XLF; the interaction is direct and is mediated via a head-to-head interaction between N-terminal head regions (PubMed:16439205, PubMed:17567543, PubMed:18158905, PubMed:20558749, PubMed:21768349, PubMed:21775435, PubMed:21936820, PubMed:22228831, PubMed:22287571, PubMed:22658747, PubMed:26100018, PubMed:27437582). Interacts with LIG4; the LIG4-XRCC4 subcomplex has a 1:2 stoichiometry and XRCC4 is required for LIG4 stability (PubMed:11702069, PubMed:12517771, PubMed:17290226, PubMed:19332554, PubMed:21982441, PubMed:22658747, PubMed:24984242, PubMed:25934149, PubMed:9242410, PubMed:9259561, PubMed:17567543). Component of the core long-range non-homologous end joining (NHEJ) complex (also named DNA-PK complex) composed of PRKDC, LIG4, XRCC4, XRCC6/Ku70, XRCC5/Ku86 and NHEJ1/XLF (PubMed:10757784, PubMed:10854421, PubMed:12547193, PubMed:17124166, PubMed:22658747, PubMed:26774286, PubMed:33854234, PubMed:34352203). Additional component of the NHEJ complex includes PAXX (PubMed:16439205). Following autophosphorylation, PRKDC dissociates from DNA, leading to formation of the short-range NHEJ complex, composed of LIG4, XRCC4, XRCC6/Ku70, XRCC5/Ku86 and NHEJ1/XLF (PubMed:33854234). Interacts with PRKDC; the interaction is direct (PubMed:12509254). Interacts with XRCC6/Ku70; the interaction is direct (PubMed:17124166). Interacts with APTX and APLF (PubMed:15380105, PubMed:17353262, PubMed:17396150, PubMed:18077224). Forms a heterotetramer with IFFO1; the interaction involves LIG4-free XRCC4 and leads to the relocalization of IFFO1 to the sites of DNA damage (PubMed:31548606). Interacts with PNKP; mainly interacts with PNKP when phosphorylated at Thr-233, but is also able to interact at much lower level with PNKP when not unphosphorylated (PubMed:15385968, PubMed:20852255, PubMed:28453785). Interacts with POLL (DNA polymerase lambda) (PubMed:30250067).</text>
</comment>
<comment type="subunit">
    <molecule>Protein XRCC4, C-terminus</molecule>
    <text evidence="57">Interacts with XKR4; interacts with the processed form of XKR4, which is cleaved by caspase.</text>
</comment>
<comment type="interaction">
    <interactant intactId="EBI-717592">
        <id>Q13426</id>
    </interactant>
    <interactant intactId="EBI-1256044">
        <id>Q8IW19</id>
        <label>APLF</label>
    </interactant>
    <organismsDiffer>false</organismsDiffer>
    <experiments>6</experiments>
</comment>
<comment type="interaction">
    <interactant intactId="EBI-717592">
        <id>Q13426</id>
    </interactant>
    <interactant intactId="EBI-847814">
        <id>Q7Z2E3</id>
        <label>APTX</label>
    </interactant>
    <organismsDiffer>false</organismsDiffer>
    <experiments>5</experiments>
</comment>
<comment type="interaction">
    <interactant intactId="EBI-717592">
        <id>Q13426</id>
    </interactant>
    <interactant intactId="EBI-2875586">
        <id>Q2TB18</id>
        <label>ASTE1</label>
    </interactant>
    <organismsDiffer>false</organismsDiffer>
    <experiments>3</experiments>
</comment>
<comment type="interaction">
    <interactant intactId="EBI-717592">
        <id>Q13426</id>
    </interactant>
    <interactant intactId="EBI-719094">
        <id>O00499</id>
        <label>BIN1</label>
    </interactant>
    <organismsDiffer>false</organismsDiffer>
    <experiments>4</experiments>
</comment>
<comment type="interaction">
    <interactant intactId="EBI-717592">
        <id>Q13426</id>
    </interactant>
    <interactant intactId="EBI-10175124">
        <id>Q8IZU0</id>
        <label>FAM9B</label>
    </interactant>
    <organismsDiffer>false</organismsDiffer>
    <experiments>9</experiments>
</comment>
<comment type="interaction">
    <interactant intactId="EBI-717592">
        <id>Q13426</id>
    </interactant>
    <interactant intactId="EBI-19954058">
        <id>O15499</id>
        <label>GSC2</label>
    </interactant>
    <organismsDiffer>false</organismsDiffer>
    <experiments>3</experiments>
</comment>
<comment type="interaction">
    <interactant intactId="EBI-717592">
        <id>Q13426</id>
    </interactant>
    <interactant intactId="EBI-720080">
        <id>Q9NVX0</id>
        <label>HAUS2</label>
    </interactant>
    <organismsDiffer>false</organismsDiffer>
    <experiments>3</experiments>
</comment>
<comment type="interaction">
    <interactant intactId="EBI-717592">
        <id>Q13426</id>
    </interactant>
    <interactant intactId="EBI-742894">
        <id>Q0D2I5</id>
        <label>IFFO1</label>
    </interactant>
    <organismsDiffer>false</organismsDiffer>
    <experiments>7</experiments>
</comment>
<comment type="interaction">
    <interactant intactId="EBI-717592">
        <id>Q13426</id>
    </interactant>
    <interactant intactId="EBI-21251044">
        <id>Q0D2I5-5</id>
        <label>IFFO1</label>
    </interactant>
    <organismsDiffer>false</organismsDiffer>
    <experiments>4</experiments>
</comment>
<comment type="interaction">
    <interactant intactId="EBI-717592">
        <id>Q13426</id>
    </interactant>
    <interactant intactId="EBI-3044087">
        <id>Q7Z3Y8</id>
        <label>KRT27</label>
    </interactant>
    <organismsDiffer>false</organismsDiffer>
    <experiments>3</experiments>
</comment>
<comment type="interaction">
    <interactant intactId="EBI-717592">
        <id>Q13426</id>
    </interactant>
    <interactant intactId="EBI-847896">
        <id>P49917</id>
        <label>LIG4</label>
    </interactant>
    <organismsDiffer>false</organismsDiffer>
    <experiments>22</experiments>
</comment>
<comment type="interaction">
    <interactant intactId="EBI-717592">
        <id>Q13426</id>
    </interactant>
    <interactant intactId="EBI-1045155">
        <id>P43360</id>
        <label>MAGEA6</label>
    </interactant>
    <organismsDiffer>false</organismsDiffer>
    <experiments>3</experiments>
</comment>
<comment type="interaction">
    <interactant intactId="EBI-717592">
        <id>Q13426</id>
    </interactant>
    <interactant intactId="EBI-847807">
        <id>Q9H9Q4</id>
        <label>NHEJ1</label>
    </interactant>
    <organismsDiffer>false</organismsDiffer>
    <experiments>11</experiments>
</comment>
<comment type="interaction">
    <interactant intactId="EBI-717592">
        <id>Q13426</id>
    </interactant>
    <interactant intactId="EBI-15891382">
        <id>Q9H9Q4-1</id>
        <label>NHEJ1</label>
    </interactant>
    <organismsDiffer>false</organismsDiffer>
    <experiments>4</experiments>
</comment>
<comment type="interaction">
    <interactant intactId="EBI-717592">
        <id>Q13426</id>
    </interactant>
    <interactant intactId="EBI-1045072">
        <id>Q96T60</id>
        <label>PNKP</label>
    </interactant>
    <organismsDiffer>false</organismsDiffer>
    <experiments>12</experiments>
</comment>
<comment type="interaction">
    <interactant intactId="EBI-717592">
        <id>Q13426</id>
    </interactant>
    <interactant intactId="EBI-717592">
        <id>Q13426</id>
        <label>XRCC4</label>
    </interactant>
    <organismsDiffer>false</organismsDiffer>
    <experiments>7</experiments>
</comment>
<comment type="interaction">
    <interactant intactId="EBI-717592">
        <id>Q13426</id>
    </interactant>
    <interactant intactId="EBI-12699927">
        <id>Q13426-3</id>
        <label>XRCC4</label>
    </interactant>
    <organismsDiffer>false</organismsDiffer>
    <experiments>3</experiments>
</comment>
<comment type="interaction">
    <interactant intactId="EBI-717592">
        <id>Q13426</id>
    </interactant>
    <interactant intactId="EBI-353208">
        <id>P12956</id>
        <label>XRCC6</label>
    </interactant>
    <organismsDiffer>false</organismsDiffer>
    <experiments>3</experiments>
</comment>
<comment type="interaction">
    <interactant intactId="EBI-15891375">
        <id>Q13426-2</id>
    </interactant>
    <interactant intactId="EBI-847896">
        <id>P49917</id>
        <label>LIG4</label>
    </interactant>
    <organismsDiffer>false</organismsDiffer>
    <experiments>11</experiments>
</comment>
<comment type="interaction">
    <interactant intactId="EBI-15891375">
        <id>Q13426-2</id>
    </interactant>
    <interactant intactId="EBI-15891382">
        <id>Q9H9Q4-1</id>
        <label>NHEJ1</label>
    </interactant>
    <organismsDiffer>false</organismsDiffer>
    <experiments>3</experiments>
</comment>
<comment type="interaction">
    <interactant intactId="EBI-15891375">
        <id>Q13426-2</id>
    </interactant>
    <interactant intactId="EBI-15891375">
        <id>Q13426-2</id>
        <label>XRCC4</label>
    </interactant>
    <organismsDiffer>false</organismsDiffer>
    <experiments>3</experiments>
</comment>
<comment type="subcellular location">
    <subcellularLocation>
        <location evidence="16 31 36 38 44 57 62">Nucleus</location>
    </subcellularLocation>
    <subcellularLocation>
        <location evidence="49 50 55">Chromosome</location>
    </subcellularLocation>
    <text evidence="49 50">Localizes to site of double-strand breaks.</text>
</comment>
<comment type="subcellular location">
    <molecule>Protein XRCC4, C-terminus</molecule>
    <subcellularLocation>
        <location evidence="57">Cytoplasm</location>
    </subcellularLocation>
    <text evidence="57">Translocates from the nucleus to the cytoplasm following cleavage by caspase-3 (CASP3).</text>
</comment>
<comment type="alternative products">
    <event type="alternative splicing"/>
    <isoform>
        <id>Q13426-1</id>
        <name>1</name>
        <sequence type="displayed"/>
    </isoform>
    <isoform>
        <id>Q13426-2</id>
        <name>2</name>
        <sequence type="described" ref="VSP_009473"/>
    </isoform>
    <isoform>
        <id>Q13426-3</id>
        <name>3</name>
        <sequence type="described" ref="VSP_009474"/>
    </isoform>
</comment>
<comment type="tissue specificity">
    <text evidence="60">Widely expressed.</text>
</comment>
<comment type="PTM">
    <text evidence="9 10 11 12 13 27 32 48 49 51 52 53 63">Phosphorylated by PRKDC at the C-terminus in response to DNA damage; Ser-260 and Ser-320 constitute the main phosphorylation sites (PubMed:12547193, PubMed:14599745, PubMed:15177042, PubMed:26666690, PubMed:28500754, PubMed:30247612, PubMed:9430729). Phosphorylations by PRKDC at the C-terminus of XRCC4 and NHEJ1/XLF are highly redundant and regulate ability of the XRCC4-NHEJ1/XLF subcomplex to bridge DNA (PubMed:22228831, PubMed:28500754). Phosphorylation by PRKDC does not prevent interaction with NHEJ1/XLF but disrupts ability to bridge DNA and promotes detachment from DNA (PubMed:22228831, PubMed:28500754). Phosphorylation at Ser-327 and Ser-328 by PRKDC promotes recognition by the SCF(FBXW7) complex and subsequent ubiquitination via 'Lys-63'-linked ubiquitin (PubMed:26774286). Phosphorylation at Thr-233 by CK2 promotes interaction with PNKP; regulating PNKP activity and localization to DNA damage sites (PubMed:15385968, PubMed:20852255, PubMed:28453785). Phosphorylation by CK2 promotes interaction with APTX (PubMed:15380105).</text>
</comment>
<comment type="PTM">
    <text evidence="14 49">Ubiquitinated at Lys-296 by the SCF(FBXW7) complex via 'Lys-63'-linked ubiquitination, thereby promoting double-strand break repair: the SCF(FBXW7) complex specifically recognizes XRCC4 when phosphorylated at Ser-327 and Ser-328 by PRKDC, and 'Lys-63'-linked ubiquitination facilitates DNA non-homologous end joining (NHEJ) by enhancing association with XRCC5/Ku80 and XRCC6/Ku70 (PubMed:26774286). Monoubiquitinated (PubMed:16412978).</text>
</comment>
<comment type="PTM">
    <molecule>DNA repair protein XRCC4</molecule>
    <text evidence="57 71">Undergoes proteolytic processing by caspase-3 (CASP3) (Probable) (PubMed:33725486). This generates the protein XRCC4, C-terminus (XRCC4/C), which translocates to the cytoplasm and activates phospholipid scramblase activity of XKR4, thereby promoting phosphatidylserine exposure on apoptotic cell surface (PubMed:33725486).</text>
</comment>
<comment type="disease" evidence="35 40 41 42 43 47 56">
    <disease id="DI-04525">
        <name>Short stature, microcephaly, and endocrine dysfunction</name>
        <acronym>SSMED</acronym>
        <description>A disease characterized by short stature and microcephaly apparent at birth, progressive postnatal growth failure, and endocrine dysfunction. In affected adults endocrine features include hypergonadotropic hypogonadism, multinodular goiter, and diabetes mellitus. Variable features observed in some patients are progressive ataxia, and lymphopenia or borderline leukopenia.</description>
        <dbReference type="MIM" id="616541"/>
    </disease>
    <text>The disease is caused by variants affecting the gene represented in this entry.</text>
</comment>
<comment type="similarity">
    <text evidence="70">Belongs to the XRCC4-XLF family. XRCC4 subfamily.</text>
</comment>
<comment type="caution">
    <text evidence="16 44">Sumoylation at Lys-210 was initially reported to regulate nuclear localization and recombination efficiency of XRCC4 (PubMed:16478998). This result is however not confirmed by another study (PubMed:25934149).</text>
</comment>
<sequence length="336" mass="38287">MERKISRIHLVSEPSITHFLQVSWEKTLESGFVITLTDGHSAWTGTVSESEISQEADDMAMEKGKYVGELRKALLSGAGPADVYTFNFSKESCYFFFEKNLKDVSFRLGSFNLEKVENPAEVIRELICYCLDTIAENQAKNEHLQKENERLLRDWNDVQGRFEKCVSAKEALETDLYKRFILVLNEKKTKIRSLHNKLLNAAQEREKDIKQEGETAICSEMTADRDPVYDESTDEESENQTDLSGLASAAVSKDDSIISSLDVTDIAPSRKRRQRMQRNLGTEPKMAPQENQLQEKENSRPDSSLPETSKKEHISAENMSLETLRNSSPEDLFDEI</sequence>
<accession>Q13426</accession>
<accession>A8K3X4</accession>
<accession>Q9BS72</accession>
<accession>Q9UP94</accession>
<evidence type="ECO:0000255" key="1"/>
<evidence type="ECO:0000256" key="2">
    <source>
        <dbReference type="SAM" id="MobiDB-lite"/>
    </source>
</evidence>
<evidence type="ECO:0000269" key="3">
    <source>
    </source>
</evidence>
<evidence type="ECO:0000269" key="4">
    <source>
    </source>
</evidence>
<evidence type="ECO:0000269" key="5">
    <source>
    </source>
</evidence>
<evidence type="ECO:0000269" key="6">
    <source>
    </source>
</evidence>
<evidence type="ECO:0000269" key="7">
    <source>
    </source>
</evidence>
<evidence type="ECO:0000269" key="8">
    <source>
    </source>
</evidence>
<evidence type="ECO:0000269" key="9">
    <source>
    </source>
</evidence>
<evidence type="ECO:0000269" key="10">
    <source>
    </source>
</evidence>
<evidence type="ECO:0000269" key="11">
    <source>
    </source>
</evidence>
<evidence type="ECO:0000269" key="12">
    <source>
    </source>
</evidence>
<evidence type="ECO:0000269" key="13">
    <source>
    </source>
</evidence>
<evidence type="ECO:0000269" key="14">
    <source>
    </source>
</evidence>
<evidence type="ECO:0000269" key="15">
    <source>
    </source>
</evidence>
<evidence type="ECO:0000269" key="16">
    <source>
    </source>
</evidence>
<evidence type="ECO:0000269" key="17">
    <source>
    </source>
</evidence>
<evidence type="ECO:0000269" key="18">
    <source>
    </source>
</evidence>
<evidence type="ECO:0000269" key="19">
    <source>
    </source>
</evidence>
<evidence type="ECO:0000269" key="20">
    <source>
    </source>
</evidence>
<evidence type="ECO:0000269" key="21">
    <source>
    </source>
</evidence>
<evidence type="ECO:0000269" key="22">
    <source>
    </source>
</evidence>
<evidence type="ECO:0000269" key="23">
    <source>
    </source>
</evidence>
<evidence type="ECO:0000269" key="24">
    <source>
    </source>
</evidence>
<evidence type="ECO:0000269" key="25">
    <source>
    </source>
</evidence>
<evidence type="ECO:0000269" key="26">
    <source>
    </source>
</evidence>
<evidence type="ECO:0000269" key="27">
    <source>
    </source>
</evidence>
<evidence type="ECO:0000269" key="28">
    <source>
    </source>
</evidence>
<evidence type="ECO:0000269" key="29">
    <source>
    </source>
</evidence>
<evidence type="ECO:0000269" key="30">
    <source>
    </source>
</evidence>
<evidence type="ECO:0000269" key="31">
    <source>
    </source>
</evidence>
<evidence type="ECO:0000269" key="32">
    <source>
    </source>
</evidence>
<evidence type="ECO:0000269" key="33">
    <source>
    </source>
</evidence>
<evidence type="ECO:0000269" key="34">
    <source>
    </source>
</evidence>
<evidence type="ECO:0000269" key="35">
    <source>
    </source>
</evidence>
<evidence type="ECO:0000269" key="36">
    <source>
    </source>
</evidence>
<evidence type="ECO:0000269" key="37">
    <source>
    </source>
</evidence>
<evidence type="ECO:0000269" key="38">
    <source>
    </source>
</evidence>
<evidence type="ECO:0000269" key="39">
    <source>
    </source>
</evidence>
<evidence type="ECO:0000269" key="40">
    <source>
    </source>
</evidence>
<evidence type="ECO:0000269" key="41">
    <source>
    </source>
</evidence>
<evidence type="ECO:0000269" key="42">
    <source>
    </source>
</evidence>
<evidence type="ECO:0000269" key="43">
    <source>
    </source>
</evidence>
<evidence type="ECO:0000269" key="44">
    <source>
    </source>
</evidence>
<evidence type="ECO:0000269" key="45">
    <source>
    </source>
</evidence>
<evidence type="ECO:0000269" key="46">
    <source>
    </source>
</evidence>
<evidence type="ECO:0000269" key="47">
    <source>
    </source>
</evidence>
<evidence type="ECO:0000269" key="48">
    <source>
    </source>
</evidence>
<evidence type="ECO:0000269" key="49">
    <source>
    </source>
</evidence>
<evidence type="ECO:0000269" key="50">
    <source>
    </source>
</evidence>
<evidence type="ECO:0000269" key="51">
    <source>
    </source>
</evidence>
<evidence type="ECO:0000269" key="52">
    <source>
    </source>
</evidence>
<evidence type="ECO:0000269" key="53">
    <source>
    </source>
</evidence>
<evidence type="ECO:0000269" key="54">
    <source>
    </source>
</evidence>
<evidence type="ECO:0000269" key="55">
    <source>
    </source>
</evidence>
<evidence type="ECO:0000269" key="56">
    <source>
    </source>
</evidence>
<evidence type="ECO:0000269" key="57">
    <source>
    </source>
</evidence>
<evidence type="ECO:0000269" key="58">
    <source>
    </source>
</evidence>
<evidence type="ECO:0000269" key="59">
    <source>
    </source>
</evidence>
<evidence type="ECO:0000269" key="60">
    <source>
    </source>
</evidence>
<evidence type="ECO:0000269" key="61">
    <source>
    </source>
</evidence>
<evidence type="ECO:0000269" key="62">
    <source>
    </source>
</evidence>
<evidence type="ECO:0000269" key="63">
    <source>
    </source>
</evidence>
<evidence type="ECO:0000269" key="64">
    <source ref="6"/>
</evidence>
<evidence type="ECO:0000303" key="65">
    <source>
    </source>
</evidence>
<evidence type="ECO:0000303" key="66">
    <source>
    </source>
</evidence>
<evidence type="ECO:0000303" key="67">
    <source>
    </source>
</evidence>
<evidence type="ECO:0000303" key="68">
    <source>
    </source>
</evidence>
<evidence type="ECO:0000303" key="69">
    <source ref="4"/>
</evidence>
<evidence type="ECO:0000305" key="70"/>
<evidence type="ECO:0000305" key="71">
    <source>
    </source>
</evidence>
<evidence type="ECO:0000305" key="72">
    <source>
    </source>
</evidence>
<evidence type="ECO:0000312" key="73">
    <source>
        <dbReference type="HGNC" id="HGNC:12831"/>
    </source>
</evidence>
<evidence type="ECO:0007744" key="74">
    <source>
        <dbReference type="PDB" id="1FU1"/>
    </source>
</evidence>
<evidence type="ECO:0007744" key="75">
    <source>
        <dbReference type="PDB" id="3II6"/>
    </source>
</evidence>
<evidence type="ECO:0007744" key="76">
    <source>
        <dbReference type="PDB" id="3Q4F"/>
    </source>
</evidence>
<evidence type="ECO:0007744" key="77">
    <source>
        <dbReference type="PDB" id="3RWR"/>
    </source>
</evidence>
<evidence type="ECO:0007744" key="78">
    <source>
        <dbReference type="PDB" id="3SR2"/>
    </source>
</evidence>
<evidence type="ECO:0007744" key="79">
    <source>
        <dbReference type="PDB" id="3W03"/>
    </source>
</evidence>
<evidence type="ECO:0007744" key="80">
    <source>
        <dbReference type="PDB" id="6ABO"/>
    </source>
</evidence>
<evidence type="ECO:0007744" key="81">
    <source>
        <dbReference type="PDB" id="7LSY"/>
    </source>
</evidence>
<evidence type="ECO:0007744" key="82">
    <source>
        <dbReference type="PDB" id="7LT3"/>
    </source>
</evidence>
<evidence type="ECO:0007744" key="83">
    <source>
        <dbReference type="PDB" id="7NFC"/>
    </source>
</evidence>
<evidence type="ECO:0007744" key="84">
    <source>
        <dbReference type="PDB" id="7NFE"/>
    </source>
</evidence>
<evidence type="ECO:0007744" key="85">
    <source>
    </source>
</evidence>
<evidence type="ECO:0007744" key="86">
    <source>
    </source>
</evidence>
<evidence type="ECO:0007744" key="87">
    <source>
    </source>
</evidence>
<evidence type="ECO:0007744" key="88">
    <source>
    </source>
</evidence>
<evidence type="ECO:0007744" key="89">
    <source>
    </source>
</evidence>
<evidence type="ECO:0007829" key="90">
    <source>
        <dbReference type="PDB" id="1FU1"/>
    </source>
</evidence>
<evidence type="ECO:0007829" key="91">
    <source>
        <dbReference type="PDB" id="5CJ4"/>
    </source>
</evidence>
<evidence type="ECO:0007829" key="92">
    <source>
        <dbReference type="PDB" id="5WJ7"/>
    </source>
</evidence>
<evidence type="ECO:0007829" key="93">
    <source>
        <dbReference type="PDB" id="7M3P"/>
    </source>
</evidence>
<feature type="chain" id="PRO_0000066047" description="DNA repair protein XRCC4">
    <location>
        <begin position="1"/>
        <end position="336"/>
    </location>
</feature>
<feature type="chain" id="PRO_0000453296" description="Protein XRCC4, C-terminus" evidence="72">
    <location>
        <begin position="266"/>
        <end position="336"/>
    </location>
</feature>
<feature type="region of interest" description="Interaction with IFFO1" evidence="55">
    <location>
        <begin position="1"/>
        <end position="213"/>
    </location>
</feature>
<feature type="region of interest" description="Interaction with LIG4" evidence="6">
    <location>
        <begin position="180"/>
        <end position="213"/>
    </location>
</feature>
<feature type="region of interest" description="Disordered" evidence="2">
    <location>
        <begin position="212"/>
        <end position="249"/>
    </location>
</feature>
<feature type="region of interest" description="Disordered" evidence="2">
    <location>
        <begin position="264"/>
        <end position="336"/>
    </location>
</feature>
<feature type="coiled-coil region" evidence="1">
    <location>
        <begin position="131"/>
        <end position="165"/>
    </location>
</feature>
<feature type="coiled-coil region" evidence="1">
    <location>
        <begin position="184"/>
        <end position="212"/>
    </location>
</feature>
<feature type="short sequence motif" description="Nuclear localization signal" evidence="44 57">
    <location>
        <begin position="270"/>
        <end position="275"/>
    </location>
</feature>
<feature type="compositionally biased region" description="Acidic residues" evidence="2">
    <location>
        <begin position="229"/>
        <end position="239"/>
    </location>
</feature>
<feature type="compositionally biased region" description="Polar residues" evidence="2">
    <location>
        <begin position="317"/>
        <end position="329"/>
    </location>
</feature>
<feature type="site" description="Cleavage; by caspase-3" evidence="72">
    <location>
        <begin position="265"/>
        <end position="266"/>
    </location>
</feature>
<feature type="modified residue" description="Phosphoserine; by PRKDC" evidence="10">
    <location>
        <position position="53"/>
    </location>
</feature>
<feature type="modified residue" description="Phosphoserine; by PRKDC" evidence="10 32 52">
    <location>
        <position position="193"/>
    </location>
</feature>
<feature type="modified residue" description="Phosphotyrosine" evidence="89">
    <location>
        <position position="229"/>
    </location>
</feature>
<feature type="modified residue" description="Phosphoserine" evidence="51">
    <location>
        <position position="232"/>
    </location>
</feature>
<feature type="modified residue" description="Phosphothreonine; by CK2" evidence="13 27 51 89">
    <location>
        <position position="233"/>
    </location>
</feature>
<feature type="modified residue" description="Phosphoserine" evidence="89">
    <location>
        <position position="237"/>
    </location>
</feature>
<feature type="modified residue" description="Phosphoserine" evidence="87">
    <location>
        <position position="256"/>
    </location>
</feature>
<feature type="modified residue" description="Phosphoserine; by PRKDC" evidence="10 11 32 52 53 88">
    <location>
        <position position="260"/>
    </location>
</feature>
<feature type="modified residue" description="Phosphoserine; by PRKDC" evidence="10 32">
    <location>
        <position position="303"/>
    </location>
</feature>
<feature type="modified residue" description="Phosphoserine; by PRKDC" evidence="52 88">
    <location>
        <position position="304"/>
    </location>
</feature>
<feature type="modified residue" description="Phosphoserine; by PRKDC" evidence="10 32 52">
    <location>
        <position position="315"/>
    </location>
</feature>
<feature type="modified residue" description="Phosphoserine; by PRKDC" evidence="10 11 32 48 52 88">
    <location>
        <position position="320"/>
    </location>
</feature>
<feature type="modified residue" description="Phosphothreonine; by PRKDC" evidence="10 32 52">
    <location>
        <position position="323"/>
    </location>
</feature>
<feature type="modified residue" description="Phosphoserine; by PRKDC" evidence="10 32 49 52 85 86">
    <location>
        <position position="327"/>
    </location>
</feature>
<feature type="modified residue" description="Phosphoserine; by PRKDC" evidence="10 32 49 52 85 86">
    <location>
        <position position="328"/>
    </location>
</feature>
<feature type="cross-link" description="Glycyl lysine isopeptide (Lys-Gly) (interchain with G-Cter in SUMO)" evidence="16">
    <location>
        <position position="210"/>
    </location>
</feature>
<feature type="cross-link" description="Glycyl lysine isopeptide (Lys-Gly) (interchain with G-Cter in ubiquitin)" evidence="49">
    <location>
        <position position="296"/>
    </location>
</feature>
<feature type="splice variant" id="VSP_009474" description="In isoform 3." evidence="66 69">
    <original>NSRPDSSLPETSKKEHISAENMSLETLRNSSPEDLFDEI</original>
    <variation>KGRKKETSEKEAV</variation>
    <location>
        <begin position="298"/>
        <end position="336"/>
    </location>
</feature>
<feature type="splice variant" id="VSP_009473" description="In isoform 2." evidence="68">
    <original>NSR</original>
    <variation>K</variation>
    <location>
        <begin position="298"/>
        <end position="300"/>
    </location>
</feature>
<feature type="sequence variant" id="VAR_022310" description="In dbSNP:rs28383138." evidence="64">
    <original>S</original>
    <variation>C</variation>
    <location>
        <position position="12"/>
    </location>
</feature>
<feature type="sequence variant" id="VAR_075822" description="In SSMED; impairs the protein function in DNA double-strand break repair; dbSNP:rs587779351." evidence="35 40 47">
    <original>W</original>
    <variation>R</variation>
    <location>
        <position position="43"/>
    </location>
</feature>
<feature type="sequence variant" id="VAR_022311" description="In dbSNP:rs28383151." evidence="64">
    <original>A</original>
    <variation>T</variation>
    <location>
        <position position="56"/>
    </location>
</feature>
<feature type="sequence variant" id="VAR_084965" description="In SSMED; impaired ability to repair DNA double-strand breaks." evidence="41">
    <original>D</original>
    <variation>E</variation>
    <location>
        <position position="82"/>
    </location>
</feature>
<feature type="sequence variant" id="VAR_022312" description="In dbSNP:rs28360135." evidence="64">
    <original>I</original>
    <variation>T</variation>
    <location>
        <position position="134"/>
    </location>
</feature>
<feature type="sequence variant" id="VAR_022313" description="In dbSNP:rs28360136." evidence="64">
    <original>E</original>
    <variation>Q</variation>
    <location>
        <position position="142"/>
    </location>
</feature>
<feature type="sequence variant" id="VAR_084966" description="In SSMED." evidence="40">
    <location>
        <begin position="161"/>
        <end position="336"/>
    </location>
</feature>
<feature type="sequence variant" id="VAR_075823" description="In SSMED; no expression of the protein is observed; complete loss of function in DNA double-strand break repair; dbSNP:rs797045017." evidence="42">
    <original>R</original>
    <variation>Q</variation>
    <location>
        <position position="161"/>
    </location>
</feature>
<feature type="sequence variant" id="VAR_084967" description="In SSMED." evidence="56">
    <location>
        <begin position="210"/>
        <end position="336"/>
    </location>
</feature>
<feature type="sequence variant" id="VAR_084968" description="In SSMED." evidence="40 43 47">
    <location>
        <begin position="225"/>
        <end position="336"/>
    </location>
</feature>
<feature type="sequence variant" id="VAR_017810" description="In dbSNP:rs2974446.">
    <original>Q</original>
    <variation>P</variation>
    <location>
        <position position="240"/>
    </location>
</feature>
<feature type="sequence variant" id="VAR_017811" description="In dbSNP:rs3734091." evidence="64">
    <original>A</original>
    <variation>S</variation>
    <location>
        <position position="247"/>
    </location>
</feature>
<feature type="sequence variant" id="VAR_084969" description="In SSMED." evidence="40 42">
    <location>
        <begin position="275"/>
        <end position="336"/>
    </location>
</feature>
<feature type="mutagenesis site" description="Abolished interaction with NHEJ1/XLF; when associated with E-99." evidence="23">
    <original>K</original>
    <variation>E</variation>
    <location>
        <position position="4"/>
    </location>
</feature>
<feature type="mutagenesis site" description="Abolished interaction with NHEJ1/XLF; when associated with E-99." evidence="23">
    <original>K</original>
    <variation>E</variation>
    <location>
        <position position="26"/>
    </location>
</feature>
<feature type="mutagenesis site" description="Abolished interaction with NHEJ1/XLF." evidence="28">
    <original>E</original>
    <variation>R</variation>
    <location>
        <position position="55"/>
    </location>
</feature>
<feature type="mutagenesis site" description="Abolished interaction with NHEJ1/XLF." evidence="28">
    <original>D</original>
    <variation>R</variation>
    <location>
        <position position="58"/>
    </location>
</feature>
<feature type="mutagenesis site" description="Abolished interaction with NHEJ1/XLF." evidence="28">
    <original>M</original>
    <variation>R</variation>
    <location>
        <position position="61"/>
    </location>
</feature>
<feature type="mutagenesis site" description="Does not affect interaction with NHEJ1/XLF." evidence="28">
    <original>E</original>
    <variation>R</variation>
    <location>
        <position position="62"/>
    </location>
</feature>
<feature type="mutagenesis site" description="Strongly decreased interaction with NHEJ1/XLF. Abolished interaction with NHEJ1/XLF; when associated with E-99. Abolished ability to bridge DNA; when associated with E-99. Abolished interaction with NHEJ1/XLF; when associated with E-102." evidence="23 28 33">
    <original>K</original>
    <variation>E</variation>
    <location>
        <position position="65"/>
    </location>
</feature>
<feature type="mutagenesis site" description="Does not affect interaction with NHEJ1/XLF." evidence="28">
    <original>E</original>
    <variation>R</variation>
    <location>
        <position position="69"/>
    </location>
</feature>
<feature type="mutagenesis site" description="Abolished interaction with NHEJ1/XLF; when associated with E-99." evidence="23">
    <original>R</original>
    <variation>E</variation>
    <location>
        <position position="71"/>
    </location>
</feature>
<feature type="mutagenesis site" description="Abolished interaction with NHEJ1/XLF; when associated with E-99. Abolished ability to bridge DNA; when associated with E-90 and E-99." evidence="23 33">
    <original>K</original>
    <variation>E</variation>
    <location>
        <position position="72"/>
    </location>
</feature>
<feature type="mutagenesis site" description="Abolished ability to bridge DNA; when associated with E-72 and E-99." evidence="33">
    <original>K</original>
    <variation>E</variation>
    <location>
        <position position="90"/>
    </location>
</feature>
<feature type="mutagenesis site" description="Abolished interaction with NHEJ1/XLF; when associated with E-4 or E-26 or E-65 or E-71 or E-72. Abolished ability to bridge DNA; when associated with E-65. Abolished ability to bridge DNA; when associated with E-72 and E-90." evidence="23 33">
    <original>K</original>
    <variation>E</variation>
    <location>
        <position position="99"/>
    </location>
</feature>
<feature type="mutagenesis site" description="Abolished interaction with NHEJ1/XLF; when associated with E-65." evidence="23">
    <original>K</original>
    <variation>E</variation>
    <location>
        <position position="102"/>
    </location>
</feature>
<feature type="mutagenesis site" description="Abolished interaction with NHEJ1/XLF." evidence="28">
    <original>F</original>
    <variation>E</variation>
    <location>
        <position position="106"/>
    </location>
</feature>
<feature type="mutagenesis site" description="No change in sumoylation." evidence="16">
    <original>K</original>
    <variation>R</variation>
    <location>
        <position position="140"/>
    </location>
</feature>
<feature type="mutagenesis site" description="Abolished DNA-binding." evidence="33">
    <original>E</original>
    <variation>A</variation>
    <location>
        <position position="170"/>
    </location>
</feature>
<feature type="mutagenesis site" description="Abolished DNA-binding." evidence="33">
    <original>R</original>
    <variation>A</variation>
    <location>
        <position position="192"/>
    </location>
</feature>
<feature type="mutagenesis site" description="In XRCC4-Ala mutant; abolished phosphorylation by PRKDC; does not affect ability to bridge DNA when associated with NHEJ1/XLF phosphorylation-defective mutant; when associated with A-260, A-304, A-315, A-320, A-323, A-327 and A-328." evidence="52">
    <original>S</original>
    <variation>A</variation>
    <location>
        <position position="193"/>
    </location>
</feature>
<feature type="mutagenesis site" description="In XRCC4-Asp mutant; phospho-mimetic mutant; abolished ability to bridge DNA when associated with NHEJ1/XLF phospho-mimetic mutant; when associated with D-260, D-304, D-315, D-320, D-323, D-327 and D-328." evidence="52">
    <original>S</original>
    <variation>D</variation>
    <location>
        <position position="193"/>
    </location>
</feature>
<feature type="mutagenesis site" description="Abolishes sumoylation. 5-fold decrease in recombination efficiency. Does not affect nuclear localization of XRCC4 and LIG4." evidence="16 44">
    <original>K</original>
    <variation>R</variation>
    <location>
        <position position="210"/>
    </location>
</feature>
<feature type="mutagenesis site" description="Abolished phosphorylation by CK2, leading to strongly reduced interaction with PNKP." evidence="13">
    <original>T</original>
    <variation>A</variation>
    <location>
        <position position="233"/>
    </location>
</feature>
<feature type="mutagenesis site" description="Impaired ability mediate double-strand break repair." evidence="38">
    <original>E</original>
    <variation>F</variation>
    <location>
        <position position="235"/>
    </location>
</feature>
<feature type="mutagenesis site" description="Reduced phosphorylation by PRKDC. In XRCC4-Ala mutant; abolished phosphorylation by PRKDC; does not affect ability to bridge DNA when associated with NHEJ1/XLF phosphorylation-defective mutant; when associated with A-193, A-304, A-315, A-320, A-323, A-327 and A-328." evidence="10 52 53">
    <original>S</original>
    <variation>A</variation>
    <location>
        <position position="260"/>
    </location>
</feature>
<feature type="mutagenesis site" description="In XRCC4-Asp mutant; phospho-mimetic mutant; abolished ability to bridge DNA when associated with NHEJ1/XLF phospho-mimetic mutant; when associated with D-193, D-304, D-315, D-320, D-323, D-327 and D-328." evidence="52">
    <original>S</original>
    <variation>D</variation>
    <location>
        <position position="260"/>
    </location>
</feature>
<feature type="mutagenesis site" description="In 2DA; abolished cleavage by caspase and ability to regulate phospholipid scramblase activity." evidence="57">
    <original>DVTD</original>
    <variation>AVTA</variation>
    <location>
        <begin position="262"/>
        <end position="265"/>
    </location>
</feature>
<feature type="mutagenesis site" description="Does not affect phosphorylation by CK2." evidence="13">
    <original>T</original>
    <variation>A</variation>
    <location>
        <position position="264"/>
    </location>
</feature>
<feature type="mutagenesis site" description="Abolished cleavage by caspase and ability to regulate phospholipid scramblase activity." evidence="57">
    <original>I</original>
    <variation>G</variation>
    <location>
        <position position="266"/>
    </location>
</feature>
<feature type="mutagenesis site" description="Impaired ability to localize in the nucleus." evidence="57">
    <original>R</original>
    <variation>A</variation>
    <location>
        <position position="270"/>
    </location>
</feature>
<feature type="mutagenesis site" description="Impaired ability to localize in the nucleus, without affecting ability to activate phospholipid scramblase activity of XKR4." evidence="57">
    <original>K</original>
    <variation>A</variation>
    <location>
        <position position="271"/>
    </location>
</feature>
<feature type="mutagenesis site" description="Abolished nuclear localization of XRCC4 and LIG4. Impaired ability to repair DNA double-strand breaks (DSBs). Reduced ubiquitination by the SCF(FBXW7) complex caused by impaired localization to the nucleus." evidence="44 49">
    <original>K</original>
    <variation>R</variation>
    <location>
        <position position="271"/>
    </location>
</feature>
<feature type="mutagenesis site" description="Impaired ability to localize in the nucleus, without affecting ability to activate phospholipid scramblase activity of XKR4." evidence="57">
    <original>R</original>
    <variation>A</variation>
    <location>
        <position position="272"/>
    </location>
</feature>
<feature type="mutagenesis site" description="Impaired ability to localize in the nucleus, without affecting ability to activate phospholipid scramblase activity of XKR4." evidence="57">
    <original>R</original>
    <variation>A</variation>
    <location>
        <position position="273"/>
    </location>
</feature>
<feature type="mutagenesis site" description="Does not affect ability to localize into the nucleus." evidence="57">
    <original>R</original>
    <variation>A</variation>
    <location>
        <position position="275"/>
    </location>
</feature>
<feature type="mutagenesis site" description="Does not affect phosphorylation by CK2." evidence="13">
    <original>T</original>
    <variation>A</variation>
    <location>
        <position position="282"/>
    </location>
</feature>
<feature type="mutagenesis site" description="Does not affect ubiquitination by the SCF(FBXW7) complex." evidence="49">
    <original>K</original>
    <variation>R</variation>
    <location>
        <position position="285"/>
    </location>
</feature>
<feature type="mutagenesis site" description="Abolished ubiquitination by the SCF(FBXW7) complex." evidence="49">
    <original>K</original>
    <variation>R</variation>
    <location>
        <position position="296"/>
    </location>
</feature>
<feature type="mutagenesis site" description="In XRCC4-Ala mutant; abolished phosphorylation by PRKDC; does not affect ability to bridge DNA when associated with NHEJ1/XLF phosphorylation-defective mutant; when associated with A-193, A-260, A-315, A-320, A-323, A-327 and A-328." evidence="52">
    <original>S</original>
    <variation>A</variation>
    <location>
        <position position="304"/>
    </location>
</feature>
<feature type="mutagenesis site" description="In XRCC4-Asp mutant; phospho-mimetic mutant; abolished ability to bridge DNA when associated with NHEJ1/XLF phospho-mimetic mutant; when associated with D-193, D-260, D-315, D-320, D-323, D-327 and D-328." evidence="52">
    <original>S</original>
    <variation>D</variation>
    <location>
        <position position="304"/>
    </location>
</feature>
<feature type="mutagenesis site" description="Does not affect phosphorylation by CK2." evidence="13">
    <original>T</original>
    <variation>A</variation>
    <location>
        <position position="308"/>
    </location>
</feature>
<feature type="mutagenesis site" description="Does not affect ubiquitination by the SCF(FBXW7) complex." evidence="49">
    <original>T</original>
    <variation>R</variation>
    <location>
        <position position="308"/>
    </location>
</feature>
<feature type="mutagenesis site" description="In XRCC4-Ala mutant; abolished phosphorylation by PRKDC; does not affect ability to bridge DNA when associated with NHEJ1/XLF phosphorylation-defective mutant; when associated with A-193, A-260, A-304, A-320, A-323, A-327 and A-328." evidence="52">
    <original>S</original>
    <variation>A</variation>
    <location>
        <position position="315"/>
    </location>
</feature>
<feature type="mutagenesis site" description="In XRCC4-Asp mutant; phospho-mimetic mutant; abolished ability to bridge DNA when associated with NHEJ1/XLF phospho-mimetic mutant; when associated with D-193, D-260, D-304, D-320, D-323, D-327 and D-328." evidence="52">
    <original>S</original>
    <variation>D</variation>
    <location>
        <position position="315"/>
    </location>
</feature>
<feature type="mutagenesis site" description="Slightly reduced phosphorylation by PRKDC. In XRCC4-Ala mutant; abolished phosphorylation by PRKDC; does not affect ability to bridge DNA when associated with NHEJ1/XLF phosphorylation-defective mutant; when associated with A-193, A-260, A-304, A-315, A-323, A-327 and A-328." evidence="10 52">
    <original>S</original>
    <variation>A</variation>
    <location>
        <position position="320"/>
    </location>
</feature>
<feature type="mutagenesis site" description="In XRCC4-Asp mutant; phospho-mimetic mutant; abolished ability to bridge DNA when associated with NHEJ1/XLF phospho-mimetic mutant; when associated with D-193, D-260, D-304, D-315, D-323, D-327 and D-328." evidence="52">
    <original>S</original>
    <variation>D</variation>
    <location>
        <position position="320"/>
    </location>
</feature>
<feature type="mutagenesis site" description="Does not affect ability mediate double-strand break repair." evidence="38">
    <original>E</original>
    <variation>L</variation>
    <location>
        <position position="322"/>
    </location>
</feature>
<feature type="mutagenesis site" description="In XRCC4-Ala mutant; abolished phosphorylation by PRKDC; does not affect ability to bridge DNA when associated with NHEJ1/XLF phosphorylation-defective mutant; when associated with A-193, A-260, A-304, A-315, A-320, A-327 and A-328. Does not affect phosphorylation by CK2." evidence="13 52">
    <original>T</original>
    <variation>A</variation>
    <location>
        <position position="323"/>
    </location>
</feature>
<feature type="mutagenesis site" description="Does not affect ability mediate double-strand break repair. In XRCC4-Asp mutant; phospho-mimetic mutant; abolished ability to bridge DNA when associated with NHEJ1/XLF phospho-mimetic mutant; when associated with D-193, D-260, D-304, D-315, D-320, D-327 and D-328." evidence="38 52">
    <original>T</original>
    <variation>D</variation>
    <location>
        <position position="323"/>
    </location>
</feature>
<feature type="mutagenesis site" description="Does not affect ability mediate double-strand break repair." evidence="38">
    <original>L</original>
    <variation>W</variation>
    <location>
        <position position="324"/>
    </location>
</feature>
<feature type="mutagenesis site" description="Abolished ability mediate double-strand break repair; impaired nuclear localization." evidence="38">
    <original>N</original>
    <variation>L</variation>
    <location>
        <position position="326"/>
    </location>
</feature>
<feature type="mutagenesis site" description="Reduced ubiquitination by the SCF(FBXW7) complex." evidence="49">
    <original>SS</original>
    <variation>AA</variation>
    <location>
        <begin position="327"/>
        <end position="328"/>
    </location>
</feature>
<feature type="mutagenesis site" description="In XRCC4-Ala mutant; abolished phosphorylation by PRKDC; does not affect ability to bridge DNA when associated with NHEJ1/XLF phosphorylation-defective mutant; when associated with A-193, A-260, A-304, A-315, A-320, A-323 and A-328." evidence="52">
    <original>S</original>
    <variation>A</variation>
    <location>
        <position position="327"/>
    </location>
</feature>
<feature type="mutagenesis site" description="Does not affect ability mediate double-strand break repair. In XRCC4-Asp mutant; phospho-mimetic mutant; abolished ability to bridge DNA when associated with NHEJ1/XLF phospho-mimetic mutant; when associated with D-193, D-260, D-304, D-315, D-320, D-323 and D-328." evidence="38 52">
    <original>S</original>
    <variation>D</variation>
    <location>
        <position position="327"/>
    </location>
</feature>
<feature type="mutagenesis site" description="In XRCC4-Ala mutant; abolished phosphorylation by PRKDC; does not affect ability to bridge DNA when associated with NHEJ1/XLF phosphorylation-defective mutant; when associated with A-193, A-260, A-304, A-315, A-320, A-323 and A-327." evidence="52">
    <original>S</original>
    <variation>A</variation>
    <location>
        <position position="328"/>
    </location>
</feature>
<feature type="mutagenesis site" description="Does not affect ability mediate double-strand break repair. In XRCC4-Asp mutant; phospho-mimetic mutant; abolished ability to bridge DNA when associated with NHEJ1/XLF phospho-mimetic mutant; when associated with D-193, D-260, D-304, D-315, D-320, D-323 and D-327." evidence="38 52">
    <original>S</original>
    <variation>D</variation>
    <location>
        <position position="328"/>
    </location>
</feature>
<feature type="mutagenesis site" description="Does not affect ability mediate double-strand break repair." evidence="38">
    <original>P</original>
    <variation>W</variation>
    <location>
        <position position="329"/>
    </location>
</feature>
<feature type="mutagenesis site" description="Does not affect ability mediate double-strand break repair." evidence="38">
    <original>E</original>
    <variation>L</variation>
    <location>
        <position position="330"/>
    </location>
</feature>
<feature type="mutagenesis site" description="Does not affect ability mediate double-strand break repair." evidence="38">
    <original>D</original>
    <variation>L</variation>
    <location>
        <position position="331"/>
    </location>
</feature>
<feature type="mutagenesis site" description="Does not affect ability mediate double-strand break repair." evidence="38">
    <original>L</original>
    <variation>W</variation>
    <location>
        <position position="332"/>
    </location>
</feature>
<feature type="mutagenesis site" description="Does not affect ability mediate double-strand break repair." evidence="38">
    <original>F</original>
    <variation>Y</variation>
    <location>
        <position position="333"/>
    </location>
</feature>
<feature type="mutagenesis site" description="Does not affect ability mediate double-strand break repair." evidence="38">
    <original>D</original>
    <variation>L</variation>
    <location>
        <position position="334"/>
    </location>
</feature>
<feature type="strand" evidence="93">
    <location>
        <begin position="2"/>
        <end position="10"/>
    </location>
</feature>
<feature type="strand" evidence="93">
    <location>
        <begin position="13"/>
        <end position="26"/>
    </location>
</feature>
<feature type="helix" evidence="93">
    <location>
        <begin position="28"/>
        <end position="30"/>
    </location>
</feature>
<feature type="strand" evidence="93">
    <location>
        <begin position="31"/>
        <end position="37"/>
    </location>
</feature>
<feature type="strand" evidence="93">
    <location>
        <begin position="42"/>
        <end position="48"/>
    </location>
</feature>
<feature type="helix" evidence="93">
    <location>
        <begin position="49"/>
        <end position="58"/>
    </location>
</feature>
<feature type="helix" evidence="93">
    <location>
        <begin position="63"/>
        <end position="74"/>
    </location>
</feature>
<feature type="turn" evidence="92">
    <location>
        <begin position="79"/>
        <end position="81"/>
    </location>
</feature>
<feature type="strand" evidence="93">
    <location>
        <begin position="84"/>
        <end position="89"/>
    </location>
</feature>
<feature type="turn" evidence="93">
    <location>
        <begin position="90"/>
        <end position="93"/>
    </location>
</feature>
<feature type="strand" evidence="93">
    <location>
        <begin position="94"/>
        <end position="101"/>
    </location>
</feature>
<feature type="strand" evidence="93">
    <location>
        <begin position="104"/>
        <end position="112"/>
    </location>
</feature>
<feature type="helix" evidence="93">
    <location>
        <begin position="119"/>
        <end position="132"/>
    </location>
</feature>
<feature type="helix" evidence="91">
    <location>
        <begin position="142"/>
        <end position="145"/>
    </location>
</feature>
<feature type="turn" evidence="90">
    <location>
        <begin position="173"/>
        <end position="176"/>
    </location>
</feature>
<feature type="helix" evidence="90">
    <location>
        <begin position="179"/>
        <end position="201"/>
    </location>
</feature>
<proteinExistence type="evidence at protein level"/>
<name>XRCC4_HUMAN</name>